<accession>Q969H0</accession>
<accession>B7ZLP9</accession>
<accession>Q68DR0</accession>
<accession>Q96A16</accession>
<accession>Q96LE0</accession>
<accession>Q96RI2</accession>
<accession>Q9NUX6</accession>
<gene>
    <name evidence="47" type="primary">FBXW7</name>
    <name evidence="44" type="synonym">FBW7</name>
    <name evidence="45" type="synonym">FBX30</name>
    <name evidence="46" type="synonym">SEL10</name>
</gene>
<dbReference type="EMBL" id="AY033553">
    <property type="protein sequence ID" value="AAK57547.1"/>
    <property type="molecule type" value="mRNA"/>
</dbReference>
<dbReference type="EMBL" id="AF383178">
    <property type="protein sequence ID" value="AAK60269.1"/>
    <property type="molecule type" value="mRNA"/>
</dbReference>
<dbReference type="EMBL" id="AF411971">
    <property type="protein sequence ID" value="AAL06290.1"/>
    <property type="molecule type" value="mRNA"/>
</dbReference>
<dbReference type="EMBL" id="AF411972">
    <property type="protein sequence ID" value="AAL06291.1"/>
    <property type="molecule type" value="mRNA"/>
</dbReference>
<dbReference type="EMBL" id="AY049984">
    <property type="protein sequence ID" value="AAL07271.1"/>
    <property type="molecule type" value="mRNA"/>
</dbReference>
<dbReference type="EMBL" id="AY008274">
    <property type="protein sequence ID" value="AAG16640.1"/>
    <property type="molecule type" value="mRNA"/>
</dbReference>
<dbReference type="EMBL" id="CR749305">
    <property type="protein sequence ID" value="CAH18160.1"/>
    <property type="molecule type" value="mRNA"/>
</dbReference>
<dbReference type="EMBL" id="BC037320">
    <property type="protein sequence ID" value="AAH37320.1"/>
    <property type="molecule type" value="mRNA"/>
</dbReference>
<dbReference type="EMBL" id="BC117244">
    <property type="protein sequence ID" value="AAI17245.1"/>
    <property type="molecule type" value="mRNA"/>
</dbReference>
<dbReference type="EMBL" id="BC117246">
    <property type="protein sequence ID" value="AAI17247.1"/>
    <property type="molecule type" value="mRNA"/>
</dbReference>
<dbReference type="EMBL" id="BC143944">
    <property type="protein sequence ID" value="AAI43945.1"/>
    <property type="molecule type" value="mRNA"/>
</dbReference>
<dbReference type="EMBL" id="AK001933">
    <property type="protein sequence ID" value="BAA91986.1"/>
    <property type="status" value="ALT_INIT"/>
    <property type="molecule type" value="mRNA"/>
</dbReference>
<dbReference type="CCDS" id="CCDS34078.1">
    <molecule id="Q969H0-4"/>
</dbReference>
<dbReference type="CCDS" id="CCDS3777.1">
    <molecule id="Q969H0-1"/>
</dbReference>
<dbReference type="CCDS" id="CCDS3778.1">
    <molecule id="Q969H0-2"/>
</dbReference>
<dbReference type="RefSeq" id="NP_001013433.1">
    <molecule id="Q969H0-4"/>
    <property type="nucleotide sequence ID" value="NM_001013415.2"/>
</dbReference>
<dbReference type="RefSeq" id="NP_001336727.1">
    <molecule id="Q969H0-1"/>
    <property type="nucleotide sequence ID" value="NM_001349798.2"/>
</dbReference>
<dbReference type="RefSeq" id="NP_060785.2">
    <molecule id="Q969H0-2"/>
    <property type="nucleotide sequence ID" value="NM_018315.4"/>
</dbReference>
<dbReference type="RefSeq" id="NP_361014.1">
    <molecule id="Q969H0-1"/>
    <property type="nucleotide sequence ID" value="NM_033632.3"/>
</dbReference>
<dbReference type="RefSeq" id="XP_011530385.1">
    <property type="nucleotide sequence ID" value="XM_011532083.1"/>
</dbReference>
<dbReference type="RefSeq" id="XP_011530386.1">
    <molecule id="Q969H0-1"/>
    <property type="nucleotide sequence ID" value="XM_011532084.3"/>
</dbReference>
<dbReference type="RefSeq" id="XP_011530387.1">
    <molecule id="Q969H0-1"/>
    <property type="nucleotide sequence ID" value="XM_011532085.3"/>
</dbReference>
<dbReference type="RefSeq" id="XP_016863851.1">
    <property type="nucleotide sequence ID" value="XM_017008362.1"/>
</dbReference>
<dbReference type="RefSeq" id="XP_024309891.1">
    <molecule id="Q969H0-1"/>
    <property type="nucleotide sequence ID" value="XM_024454123.2"/>
</dbReference>
<dbReference type="RefSeq" id="XP_047271853.1">
    <molecule id="Q969H0-1"/>
    <property type="nucleotide sequence ID" value="XM_047415897.1"/>
</dbReference>
<dbReference type="RefSeq" id="XP_047271854.1">
    <molecule id="Q969H0-1"/>
    <property type="nucleotide sequence ID" value="XM_047415898.1"/>
</dbReference>
<dbReference type="RefSeq" id="XP_047271855.1">
    <molecule id="Q969H0-1"/>
    <property type="nucleotide sequence ID" value="XM_047415899.1"/>
</dbReference>
<dbReference type="RefSeq" id="XP_047271856.1">
    <molecule id="Q969H0-1"/>
    <property type="nucleotide sequence ID" value="XM_047415900.1"/>
</dbReference>
<dbReference type="RefSeq" id="XP_047271857.1">
    <molecule id="Q969H0-1"/>
    <property type="nucleotide sequence ID" value="XM_047415901.1"/>
</dbReference>
<dbReference type="RefSeq" id="XP_054206367.1">
    <molecule id="Q969H0-1"/>
    <property type="nucleotide sequence ID" value="XM_054350392.1"/>
</dbReference>
<dbReference type="RefSeq" id="XP_054206368.1">
    <molecule id="Q969H0-1"/>
    <property type="nucleotide sequence ID" value="XM_054350393.1"/>
</dbReference>
<dbReference type="RefSeq" id="XP_054206369.1">
    <molecule id="Q969H0-1"/>
    <property type="nucleotide sequence ID" value="XM_054350394.1"/>
</dbReference>
<dbReference type="RefSeq" id="XP_054206370.1">
    <molecule id="Q969H0-1"/>
    <property type="nucleotide sequence ID" value="XM_054350395.1"/>
</dbReference>
<dbReference type="RefSeq" id="XP_054206371.1">
    <molecule id="Q969H0-1"/>
    <property type="nucleotide sequence ID" value="XM_054350396.1"/>
</dbReference>
<dbReference type="RefSeq" id="XP_054206372.1">
    <molecule id="Q969H0-1"/>
    <property type="nucleotide sequence ID" value="XM_054350397.1"/>
</dbReference>
<dbReference type="RefSeq" id="XP_054206373.1">
    <molecule id="Q969H0-1"/>
    <property type="nucleotide sequence ID" value="XM_054350398.1"/>
</dbReference>
<dbReference type="PDB" id="2OVP">
    <property type="method" value="X-ray"/>
    <property type="resolution" value="2.90 A"/>
    <property type="chains" value="B=263-707"/>
</dbReference>
<dbReference type="PDB" id="2OVQ">
    <property type="method" value="X-ray"/>
    <property type="resolution" value="2.60 A"/>
    <property type="chains" value="B=263-707"/>
</dbReference>
<dbReference type="PDB" id="2OVR">
    <property type="method" value="X-ray"/>
    <property type="resolution" value="2.50 A"/>
    <property type="chains" value="B=263-707"/>
</dbReference>
<dbReference type="PDB" id="5IBK">
    <property type="method" value="X-ray"/>
    <property type="resolution" value="2.50 A"/>
    <property type="chains" value="B/E=263-323"/>
</dbReference>
<dbReference type="PDB" id="5V4B">
    <property type="method" value="X-ray"/>
    <property type="resolution" value="2.60 A"/>
    <property type="chains" value="B=263-706"/>
</dbReference>
<dbReference type="PDB" id="7T1Y">
    <property type="method" value="X-ray"/>
    <property type="resolution" value="2.55 A"/>
    <property type="chains" value="B=263-707"/>
</dbReference>
<dbReference type="PDB" id="7T1Z">
    <property type="method" value="X-ray"/>
    <property type="resolution" value="2.77 A"/>
    <property type="chains" value="B=263-707"/>
</dbReference>
<dbReference type="PDBsum" id="2OVP"/>
<dbReference type="PDBsum" id="2OVQ"/>
<dbReference type="PDBsum" id="2OVR"/>
<dbReference type="PDBsum" id="5IBK"/>
<dbReference type="PDBsum" id="5V4B"/>
<dbReference type="PDBsum" id="7T1Y"/>
<dbReference type="PDBsum" id="7T1Z"/>
<dbReference type="SMR" id="Q969H0"/>
<dbReference type="BioGRID" id="120581">
    <property type="interactions" value="1207"/>
</dbReference>
<dbReference type="ComplexPortal" id="CPX-7763">
    <property type="entry name" value="SCF E3 ubiquitin ligase complex, FBXW7 variant"/>
</dbReference>
<dbReference type="CORUM" id="Q969H0"/>
<dbReference type="DIP" id="DIP-27613N"/>
<dbReference type="ELM" id="Q969H0"/>
<dbReference type="FunCoup" id="Q969H0">
    <property type="interactions" value="1921"/>
</dbReference>
<dbReference type="IntAct" id="Q969H0">
    <property type="interactions" value="71"/>
</dbReference>
<dbReference type="MINT" id="Q969H0"/>
<dbReference type="STRING" id="9606.ENSP00000474725"/>
<dbReference type="GlyGen" id="Q969H0">
    <property type="glycosylation" value="2 sites, 1 O-linked glycan (2 sites)"/>
</dbReference>
<dbReference type="iPTMnet" id="Q969H0"/>
<dbReference type="PhosphoSitePlus" id="Q969H0"/>
<dbReference type="BioMuta" id="FBXW7"/>
<dbReference type="DMDM" id="44887885"/>
<dbReference type="jPOST" id="Q969H0"/>
<dbReference type="MassIVE" id="Q969H0"/>
<dbReference type="PaxDb" id="9606-ENSP00000281708"/>
<dbReference type="PeptideAtlas" id="Q969H0"/>
<dbReference type="ProteomicsDB" id="75759">
    <molecule id="Q969H0-1"/>
</dbReference>
<dbReference type="ProteomicsDB" id="75760">
    <molecule id="Q969H0-2"/>
</dbReference>
<dbReference type="ProteomicsDB" id="75762">
    <molecule id="Q969H0-4"/>
</dbReference>
<dbReference type="Antibodypedia" id="27779">
    <property type="antibodies" value="675 antibodies from 36 providers"/>
</dbReference>
<dbReference type="DNASU" id="55294"/>
<dbReference type="Ensembl" id="ENST00000281708.10">
    <molecule id="Q969H0-1"/>
    <property type="protein sequence ID" value="ENSP00000281708.3"/>
    <property type="gene ID" value="ENSG00000109670.17"/>
</dbReference>
<dbReference type="Ensembl" id="ENST00000296555.11">
    <molecule id="Q969H0-4"/>
    <property type="protein sequence ID" value="ENSP00000296555.4"/>
    <property type="gene ID" value="ENSG00000109670.17"/>
</dbReference>
<dbReference type="Ensembl" id="ENST00000393956.9">
    <molecule id="Q969H0-2"/>
    <property type="protein sequence ID" value="ENSP00000377528.4"/>
    <property type="gene ID" value="ENSG00000109670.17"/>
</dbReference>
<dbReference type="Ensembl" id="ENST00000603548.6">
    <molecule id="Q969H0-1"/>
    <property type="protein sequence ID" value="ENSP00000474725.1"/>
    <property type="gene ID" value="ENSG00000109670.17"/>
</dbReference>
<dbReference type="Ensembl" id="ENST00000603841.1">
    <molecule id="Q969H0-1"/>
    <property type="protein sequence ID" value="ENSP00000474971.1"/>
    <property type="gene ID" value="ENSG00000109670.17"/>
</dbReference>
<dbReference type="GeneID" id="55294"/>
<dbReference type="KEGG" id="hsa:55294"/>
<dbReference type="MANE-Select" id="ENST00000281708.10">
    <property type="protein sequence ID" value="ENSP00000281708.3"/>
    <property type="RefSeq nucleotide sequence ID" value="NM_001349798.2"/>
    <property type="RefSeq protein sequence ID" value="NP_001336727.1"/>
</dbReference>
<dbReference type="UCSC" id="uc003imq.4">
    <molecule id="Q969H0-1"/>
    <property type="organism name" value="human"/>
</dbReference>
<dbReference type="AGR" id="HGNC:16712"/>
<dbReference type="CTD" id="55294"/>
<dbReference type="DisGeNET" id="55294"/>
<dbReference type="GeneCards" id="FBXW7"/>
<dbReference type="HGNC" id="HGNC:16712">
    <property type="gene designation" value="FBXW7"/>
</dbReference>
<dbReference type="HPA" id="ENSG00000109670">
    <property type="expression patterns" value="Tissue enhanced (brain)"/>
</dbReference>
<dbReference type="MalaCards" id="FBXW7"/>
<dbReference type="MIM" id="606278">
    <property type="type" value="gene"/>
</dbReference>
<dbReference type="MIM" id="620012">
    <property type="type" value="phenotype"/>
</dbReference>
<dbReference type="neXtProt" id="NX_Q969H0"/>
<dbReference type="OpenTargets" id="ENSG00000109670"/>
<dbReference type="PharmGKB" id="PA28054"/>
<dbReference type="VEuPathDB" id="HostDB:ENSG00000109670"/>
<dbReference type="eggNOG" id="KOG0274">
    <property type="taxonomic scope" value="Eukaryota"/>
</dbReference>
<dbReference type="GeneTree" id="ENSGT00940000154986"/>
<dbReference type="InParanoid" id="Q969H0"/>
<dbReference type="OMA" id="AMVPWED"/>
<dbReference type="OrthoDB" id="190105at2759"/>
<dbReference type="PAN-GO" id="Q969H0">
    <property type="GO annotations" value="5 GO annotations based on evolutionary models"/>
</dbReference>
<dbReference type="PhylomeDB" id="Q969H0"/>
<dbReference type="TreeFam" id="TF101074"/>
<dbReference type="PathwayCommons" id="Q969H0"/>
<dbReference type="Reactome" id="R-HSA-2122947">
    <property type="pathway name" value="NOTCH1 Intracellular Domain Regulates Transcription"/>
</dbReference>
<dbReference type="Reactome" id="R-HSA-2644606">
    <property type="pathway name" value="Constitutive Signaling by NOTCH1 PEST Domain Mutants"/>
</dbReference>
<dbReference type="Reactome" id="R-HSA-2644607">
    <property type="pathway name" value="Loss of Function of FBXW7 in Cancer and NOTCH1 Signaling"/>
</dbReference>
<dbReference type="Reactome" id="R-HSA-2894862">
    <property type="pathway name" value="Constitutive Signaling by NOTCH1 HD+PEST Domain Mutants"/>
</dbReference>
<dbReference type="Reactome" id="R-HSA-390471">
    <property type="pathway name" value="Association of TriC/CCT with target proteins during biosynthesis"/>
</dbReference>
<dbReference type="Reactome" id="R-HSA-8951664">
    <property type="pathway name" value="Neddylation"/>
</dbReference>
<dbReference type="Reactome" id="R-HSA-9604323">
    <property type="pathway name" value="Negative regulation of NOTCH4 signaling"/>
</dbReference>
<dbReference type="Reactome" id="R-HSA-983168">
    <property type="pathway name" value="Antigen processing: Ubiquitination &amp; Proteasome degradation"/>
</dbReference>
<dbReference type="SignaLink" id="Q969H0"/>
<dbReference type="SIGNOR" id="Q969H0"/>
<dbReference type="UniPathway" id="UPA00143"/>
<dbReference type="BioGRID-ORCS" id="55294">
    <property type="hits" value="77 hits in 1215 CRISPR screens"/>
</dbReference>
<dbReference type="CD-CODE" id="91857CE7">
    <property type="entry name" value="Nucleolus"/>
</dbReference>
<dbReference type="ChiTaRS" id="FBXW7">
    <property type="organism name" value="human"/>
</dbReference>
<dbReference type="EvolutionaryTrace" id="Q969H0"/>
<dbReference type="GeneWiki" id="FBXW7"/>
<dbReference type="GenomeRNAi" id="55294"/>
<dbReference type="Pharos" id="Q969H0">
    <property type="development level" value="Tbio"/>
</dbReference>
<dbReference type="PRO" id="PR:Q969H0"/>
<dbReference type="Proteomes" id="UP000005640">
    <property type="component" value="Chromosome 4"/>
</dbReference>
<dbReference type="RNAct" id="Q969H0">
    <property type="molecule type" value="protein"/>
</dbReference>
<dbReference type="Bgee" id="ENSG00000109670">
    <property type="expression patterns" value="Expressed in Brodmann (1909) area 23 and 212 other cell types or tissues"/>
</dbReference>
<dbReference type="ExpressionAtlas" id="Q969H0">
    <property type="expression patterns" value="baseline and differential"/>
</dbReference>
<dbReference type="GO" id="GO:0005694">
    <property type="term" value="C:chromosome"/>
    <property type="evidence" value="ECO:0007669"/>
    <property type="project" value="UniProtKB-SubCell"/>
</dbReference>
<dbReference type="GO" id="GO:0005737">
    <property type="term" value="C:cytoplasm"/>
    <property type="evidence" value="ECO:0000314"/>
    <property type="project" value="ParkinsonsUK-UCL"/>
</dbReference>
<dbReference type="GO" id="GO:0005829">
    <property type="term" value="C:cytosol"/>
    <property type="evidence" value="ECO:0000304"/>
    <property type="project" value="Reactome"/>
</dbReference>
<dbReference type="GO" id="GO:0005730">
    <property type="term" value="C:nucleolus"/>
    <property type="evidence" value="ECO:0000314"/>
    <property type="project" value="UniProtKB"/>
</dbReference>
<dbReference type="GO" id="GO:0005654">
    <property type="term" value="C:nucleoplasm"/>
    <property type="evidence" value="ECO:0000314"/>
    <property type="project" value="UniProtKB"/>
</dbReference>
<dbReference type="GO" id="GO:0005634">
    <property type="term" value="C:nucleus"/>
    <property type="evidence" value="ECO:0000314"/>
    <property type="project" value="UniProtKB"/>
</dbReference>
<dbReference type="GO" id="GO:1990452">
    <property type="term" value="C:Parkin-FBXW7-Cul1 ubiquitin ligase complex"/>
    <property type="evidence" value="ECO:0000353"/>
    <property type="project" value="ParkinsonsUK-UCL"/>
</dbReference>
<dbReference type="GO" id="GO:0032991">
    <property type="term" value="C:protein-containing complex"/>
    <property type="evidence" value="ECO:0000314"/>
    <property type="project" value="UniProtKB"/>
</dbReference>
<dbReference type="GO" id="GO:0019005">
    <property type="term" value="C:SCF ubiquitin ligase complex"/>
    <property type="evidence" value="ECO:0000314"/>
    <property type="project" value="UniProtKB"/>
</dbReference>
<dbReference type="GO" id="GO:0030332">
    <property type="term" value="F:cyclin binding"/>
    <property type="evidence" value="ECO:0000314"/>
    <property type="project" value="ParkinsonsUK-UCL"/>
</dbReference>
<dbReference type="GO" id="GO:0042802">
    <property type="term" value="F:identical protein binding"/>
    <property type="evidence" value="ECO:0000353"/>
    <property type="project" value="IntAct"/>
</dbReference>
<dbReference type="GO" id="GO:0050816">
    <property type="term" value="F:phosphothreonine residue binding"/>
    <property type="evidence" value="ECO:0000314"/>
    <property type="project" value="UniProtKB"/>
</dbReference>
<dbReference type="GO" id="GO:0030674">
    <property type="term" value="F:protein-macromolecule adaptor activity"/>
    <property type="evidence" value="ECO:0000314"/>
    <property type="project" value="ParkinsonsUK-UCL"/>
</dbReference>
<dbReference type="GO" id="GO:0043130">
    <property type="term" value="F:ubiquitin binding"/>
    <property type="evidence" value="ECO:0000318"/>
    <property type="project" value="GO_Central"/>
</dbReference>
<dbReference type="GO" id="GO:0031625">
    <property type="term" value="F:ubiquitin protein ligase binding"/>
    <property type="evidence" value="ECO:0000353"/>
    <property type="project" value="ParkinsonsUK-UCL"/>
</dbReference>
<dbReference type="GO" id="GO:1990756">
    <property type="term" value="F:ubiquitin-like ligase-substrate adaptor activity"/>
    <property type="evidence" value="ECO:0000314"/>
    <property type="project" value="UniProt"/>
</dbReference>
<dbReference type="GO" id="GO:0097027">
    <property type="term" value="F:ubiquitin-protein transferase activator activity"/>
    <property type="evidence" value="ECO:0000314"/>
    <property type="project" value="ParkinsonsUK-UCL"/>
</dbReference>
<dbReference type="GO" id="GO:0034644">
    <property type="term" value="P:cellular response to UV"/>
    <property type="evidence" value="ECO:0000314"/>
    <property type="project" value="UniProtKB"/>
</dbReference>
<dbReference type="GO" id="GO:0006974">
    <property type="term" value="P:DNA damage response"/>
    <property type="evidence" value="ECO:0000314"/>
    <property type="project" value="UniProtKB"/>
</dbReference>
<dbReference type="GO" id="GO:0006281">
    <property type="term" value="P:DNA repair"/>
    <property type="evidence" value="ECO:0007669"/>
    <property type="project" value="UniProtKB-KW"/>
</dbReference>
<dbReference type="GO" id="GO:0055088">
    <property type="term" value="P:lipid homeostasis"/>
    <property type="evidence" value="ECO:0000250"/>
    <property type="project" value="BHF-UCL"/>
</dbReference>
<dbReference type="GO" id="GO:0010629">
    <property type="term" value="P:negative regulation of gene expression"/>
    <property type="evidence" value="ECO:0000315"/>
    <property type="project" value="BHF-UCL"/>
</dbReference>
<dbReference type="GO" id="GO:2000346">
    <property type="term" value="P:negative regulation of hepatocyte proliferation"/>
    <property type="evidence" value="ECO:0000250"/>
    <property type="project" value="BHF-UCL"/>
</dbReference>
<dbReference type="GO" id="GO:0045746">
    <property type="term" value="P:negative regulation of Notch signaling pathway"/>
    <property type="evidence" value="ECO:0000250"/>
    <property type="project" value="BHF-UCL"/>
</dbReference>
<dbReference type="GO" id="GO:2001205">
    <property type="term" value="P:negative regulation of osteoclast development"/>
    <property type="evidence" value="ECO:0000315"/>
    <property type="project" value="UniProtKB"/>
</dbReference>
<dbReference type="GO" id="GO:2000639">
    <property type="term" value="P:negative regulation of SREBP signaling pathway"/>
    <property type="evidence" value="ECO:0000250"/>
    <property type="project" value="BHF-UCL"/>
</dbReference>
<dbReference type="GO" id="GO:0010868">
    <property type="term" value="P:negative regulation of triglyceride biosynthetic process"/>
    <property type="evidence" value="ECO:0000250"/>
    <property type="project" value="BHF-UCL"/>
</dbReference>
<dbReference type="GO" id="GO:0045742">
    <property type="term" value="P:positive regulation of epidermal growth factor receptor signaling pathway"/>
    <property type="evidence" value="ECO:0000250"/>
    <property type="project" value="BHF-UCL"/>
</dbReference>
<dbReference type="GO" id="GO:0070374">
    <property type="term" value="P:positive regulation of ERK1 and ERK2 cascade"/>
    <property type="evidence" value="ECO:0000250"/>
    <property type="project" value="BHF-UCL"/>
</dbReference>
<dbReference type="GO" id="GO:1903378">
    <property type="term" value="P:positive regulation of oxidative stress-induced neuron intrinsic apoptotic signaling pathway"/>
    <property type="evidence" value="ECO:0000314"/>
    <property type="project" value="ParkinsonsUK-UCL"/>
</dbReference>
<dbReference type="GO" id="GO:1901800">
    <property type="term" value="P:positive regulation of proteasomal protein catabolic process"/>
    <property type="evidence" value="ECO:0000314"/>
    <property type="project" value="ParkinsonsUK-UCL"/>
</dbReference>
<dbReference type="GO" id="GO:1903955">
    <property type="term" value="P:positive regulation of protein targeting to mitochondrion"/>
    <property type="evidence" value="ECO:0000315"/>
    <property type="project" value="ParkinsonsUK-UCL"/>
</dbReference>
<dbReference type="GO" id="GO:0031398">
    <property type="term" value="P:positive regulation of protein ubiquitination"/>
    <property type="evidence" value="ECO:0000314"/>
    <property type="project" value="ParkinsonsUK-UCL"/>
</dbReference>
<dbReference type="GO" id="GO:2000060">
    <property type="term" value="P:positive regulation of ubiquitin-dependent protein catabolic process"/>
    <property type="evidence" value="ECO:0000315"/>
    <property type="project" value="UniProtKB"/>
</dbReference>
<dbReference type="GO" id="GO:0043161">
    <property type="term" value="P:proteasome-mediated ubiquitin-dependent protein catabolic process"/>
    <property type="evidence" value="ECO:0000314"/>
    <property type="project" value="UniProt"/>
</dbReference>
<dbReference type="GO" id="GO:0050821">
    <property type="term" value="P:protein stabilization"/>
    <property type="evidence" value="ECO:0000250"/>
    <property type="project" value="BHF-UCL"/>
</dbReference>
<dbReference type="GO" id="GO:0016567">
    <property type="term" value="P:protein ubiquitination"/>
    <property type="evidence" value="ECO:0000314"/>
    <property type="project" value="UniProtKB"/>
</dbReference>
<dbReference type="GO" id="GO:1902806">
    <property type="term" value="P:regulation of cell cycle G1/S phase transition"/>
    <property type="evidence" value="ECO:0000304"/>
    <property type="project" value="ParkinsonsUK-UCL"/>
</dbReference>
<dbReference type="GO" id="GO:0042752">
    <property type="term" value="P:regulation of circadian rhythm"/>
    <property type="evidence" value="ECO:0000315"/>
    <property type="project" value="UniProtKB"/>
</dbReference>
<dbReference type="GO" id="GO:0010883">
    <property type="term" value="P:regulation of lipid storage"/>
    <property type="evidence" value="ECO:0000250"/>
    <property type="project" value="BHF-UCL"/>
</dbReference>
<dbReference type="GO" id="GO:1901524">
    <property type="term" value="P:regulation of mitophagy"/>
    <property type="evidence" value="ECO:0000315"/>
    <property type="project" value="ParkinsonsUK-UCL"/>
</dbReference>
<dbReference type="GO" id="GO:0032880">
    <property type="term" value="P:regulation of protein localization"/>
    <property type="evidence" value="ECO:0000250"/>
    <property type="project" value="BHF-UCL"/>
</dbReference>
<dbReference type="GO" id="GO:0048511">
    <property type="term" value="P:rhythmic process"/>
    <property type="evidence" value="ECO:0007669"/>
    <property type="project" value="UniProtKB-KW"/>
</dbReference>
<dbReference type="GO" id="GO:0031146">
    <property type="term" value="P:SCF-dependent proteasomal ubiquitin-dependent protein catabolic process"/>
    <property type="evidence" value="ECO:0000314"/>
    <property type="project" value="UniProtKB"/>
</dbReference>
<dbReference type="GO" id="GO:0007062">
    <property type="term" value="P:sister chromatid cohesion"/>
    <property type="evidence" value="ECO:0000315"/>
    <property type="project" value="BHF-UCL"/>
</dbReference>
<dbReference type="GO" id="GO:0010992">
    <property type="term" value="P:ubiquitin recycling"/>
    <property type="evidence" value="ECO:0000318"/>
    <property type="project" value="GO_Central"/>
</dbReference>
<dbReference type="GO" id="GO:0001944">
    <property type="term" value="P:vasculature development"/>
    <property type="evidence" value="ECO:0000304"/>
    <property type="project" value="BHF-UCL"/>
</dbReference>
<dbReference type="CDD" id="cd22133">
    <property type="entry name" value="F-box_FBXW7"/>
    <property type="match status" value="1"/>
</dbReference>
<dbReference type="CDD" id="cd00200">
    <property type="entry name" value="WD40"/>
    <property type="match status" value="1"/>
</dbReference>
<dbReference type="FunFam" id="1.20.1280.50:FF:000004">
    <property type="entry name" value="F-box/WD repeat-containing protein 7 isoform X1"/>
    <property type="match status" value="1"/>
</dbReference>
<dbReference type="FunFam" id="2.130.10.10:FF:000032">
    <property type="entry name" value="F-box/WD repeat-containing protein 7 isoform X1"/>
    <property type="match status" value="1"/>
</dbReference>
<dbReference type="Gene3D" id="1.20.1280.50">
    <property type="match status" value="1"/>
</dbReference>
<dbReference type="Gene3D" id="2.130.10.10">
    <property type="entry name" value="YVTN repeat-like/Quinoprotein amine dehydrogenase"/>
    <property type="match status" value="1"/>
</dbReference>
<dbReference type="InterPro" id="IPR036047">
    <property type="entry name" value="F-box-like_dom_sf"/>
</dbReference>
<dbReference type="InterPro" id="IPR001810">
    <property type="entry name" value="F-box_dom"/>
</dbReference>
<dbReference type="InterPro" id="IPR020472">
    <property type="entry name" value="G-protein_beta_WD-40_rep"/>
</dbReference>
<dbReference type="InterPro" id="IPR015943">
    <property type="entry name" value="WD40/YVTN_repeat-like_dom_sf"/>
</dbReference>
<dbReference type="InterPro" id="IPR019775">
    <property type="entry name" value="WD40_repeat_CS"/>
</dbReference>
<dbReference type="InterPro" id="IPR036322">
    <property type="entry name" value="WD40_repeat_dom_sf"/>
</dbReference>
<dbReference type="InterPro" id="IPR001680">
    <property type="entry name" value="WD40_rpt"/>
</dbReference>
<dbReference type="PANTHER" id="PTHR19849:SF1">
    <property type="entry name" value="F-BOX_WD REPEAT-CONTAINING PROTEIN 7"/>
    <property type="match status" value="1"/>
</dbReference>
<dbReference type="PANTHER" id="PTHR19849">
    <property type="entry name" value="PHOSPHOLIPASE A-2-ACTIVATING PROTEIN"/>
    <property type="match status" value="1"/>
</dbReference>
<dbReference type="Pfam" id="PF12937">
    <property type="entry name" value="F-box-like"/>
    <property type="match status" value="1"/>
</dbReference>
<dbReference type="Pfam" id="PF00400">
    <property type="entry name" value="WD40"/>
    <property type="match status" value="7"/>
</dbReference>
<dbReference type="PRINTS" id="PR00320">
    <property type="entry name" value="GPROTEINBRPT"/>
</dbReference>
<dbReference type="SMART" id="SM00256">
    <property type="entry name" value="FBOX"/>
    <property type="match status" value="1"/>
</dbReference>
<dbReference type="SMART" id="SM00320">
    <property type="entry name" value="WD40"/>
    <property type="match status" value="8"/>
</dbReference>
<dbReference type="SUPFAM" id="SSF81383">
    <property type="entry name" value="F-box domain"/>
    <property type="match status" value="1"/>
</dbReference>
<dbReference type="SUPFAM" id="SSF50978">
    <property type="entry name" value="WD40 repeat-like"/>
    <property type="match status" value="1"/>
</dbReference>
<dbReference type="PROSITE" id="PS50181">
    <property type="entry name" value="FBOX"/>
    <property type="match status" value="1"/>
</dbReference>
<dbReference type="PROSITE" id="PS00678">
    <property type="entry name" value="WD_REPEATS_1"/>
    <property type="match status" value="5"/>
</dbReference>
<dbReference type="PROSITE" id="PS50082">
    <property type="entry name" value="WD_REPEATS_2"/>
    <property type="match status" value="7"/>
</dbReference>
<dbReference type="PROSITE" id="PS50294">
    <property type="entry name" value="WD_REPEATS_REGION"/>
    <property type="match status" value="1"/>
</dbReference>
<reference key="1">
    <citation type="journal article" date="1999" name="Curr. Biol.">
        <title>A family of mammalian F-box proteins.</title>
        <authorList>
            <person name="Winston J.T."/>
            <person name="Koepp D.M."/>
            <person name="Zhu C."/>
            <person name="Elledge S.J."/>
            <person name="Harper J.W."/>
        </authorList>
    </citation>
    <scope>NUCLEOTIDE SEQUENCE [MRNA] (ISOFORM 2)</scope>
</reference>
<reference key="2">
    <citation type="journal article" date="2001" name="Nature">
        <title>Archipelago regulates cyclin E levels in Drosophila and is mutated in human cancer cell lines.</title>
        <authorList>
            <person name="Moberg K.H."/>
            <person name="Bell D.W."/>
            <person name="Wahrer D.C.R."/>
            <person name="Haber D.A."/>
            <person name="Hariharan I.K."/>
        </authorList>
    </citation>
    <scope>NUCLEOTIDE SEQUENCE [MRNA] (ISOFORMS 1 AND 2)</scope>
    <scope>VARIANTS CYS-465 AND LEU-505</scope>
</reference>
<reference key="3">
    <citation type="journal article" date="2001" name="Nature">
        <title>Human F-box protein hCdc4 targets cyclin E for proteolysis and is mutated in a breast cancer cell line.</title>
        <authorList>
            <person name="Strohmaier H."/>
            <person name="Spruck C.H."/>
            <person name="Kaiser P."/>
            <person name="Won K.-A."/>
            <person name="Sangfelt O."/>
            <person name="Reed S.I."/>
        </authorList>
    </citation>
    <scope>NUCLEOTIDE SEQUENCE [MRNA] (ISOFORM 1)</scope>
    <scope>FUNCTION</scope>
    <scope>IDENTIFICATION IN SCF COMPLEX</scope>
    <scope>INTERACTION WITH CYCLIN E</scope>
</reference>
<reference key="4">
    <citation type="journal article" date="2002" name="J. Neurochem.">
        <title>SEL-10 interacts with presenilin 1, facilitates its ubiquitination, and alters A-beta peptide production.</title>
        <authorList>
            <person name="Li J."/>
            <person name="Pauley A.M."/>
            <person name="Myers R.L."/>
            <person name="Shuang R."/>
            <person name="Brashler J.R."/>
            <person name="Yan R."/>
            <person name="Buhl A.E."/>
            <person name="Ruble C."/>
            <person name="Gurney M.E."/>
        </authorList>
    </citation>
    <scope>NUCLEOTIDE SEQUENCE [MRNA] (ISOFORM 3)</scope>
    <scope>FUNCTION</scope>
    <scope>TISSUE SPECIFICITY</scope>
    <scope>INTERACTION WITH PSEN1</scope>
</reference>
<reference key="5">
    <citation type="journal article" date="2007" name="BMC Genomics">
        <title>The full-ORF clone resource of the German cDNA consortium.</title>
        <authorList>
            <person name="Bechtel S."/>
            <person name="Rosenfelder H."/>
            <person name="Duda A."/>
            <person name="Schmidt C.P."/>
            <person name="Ernst U."/>
            <person name="Wellenreuther R."/>
            <person name="Mehrle A."/>
            <person name="Schuster C."/>
            <person name="Bahr A."/>
            <person name="Bloecker H."/>
            <person name="Heubner D."/>
            <person name="Hoerlein A."/>
            <person name="Michel G."/>
            <person name="Wedler H."/>
            <person name="Koehrer K."/>
            <person name="Ottenwaelder B."/>
            <person name="Poustka A."/>
            <person name="Wiemann S."/>
            <person name="Schupp I."/>
        </authorList>
    </citation>
    <scope>NUCLEOTIDE SEQUENCE [LARGE SCALE MRNA] (ISOFORM 1)</scope>
    <source>
        <tissue>Salivary gland</tissue>
    </source>
</reference>
<reference key="6">
    <citation type="journal article" date="2004" name="Genome Res.">
        <title>The status, quality, and expansion of the NIH full-length cDNA project: the Mammalian Gene Collection (MGC).</title>
        <authorList>
            <consortium name="The MGC Project Team"/>
        </authorList>
    </citation>
    <scope>NUCLEOTIDE SEQUENCE [LARGE SCALE MRNA] (ISOFORM 1)</scope>
    <scope>PARTIAL NUCLEOTIDE SEQUENCE [LARGE SCALE MRNA] (ISOFORM 2)</scope>
    <source>
        <tissue>Brain</tissue>
    </source>
</reference>
<reference key="7">
    <citation type="journal article" date="2004" name="Nat. Genet.">
        <title>Complete sequencing and characterization of 21,243 full-length human cDNAs.</title>
        <authorList>
            <person name="Ota T."/>
            <person name="Suzuki Y."/>
            <person name="Nishikawa T."/>
            <person name="Otsuki T."/>
            <person name="Sugiyama T."/>
            <person name="Irie R."/>
            <person name="Wakamatsu A."/>
            <person name="Hayashi K."/>
            <person name="Sato H."/>
            <person name="Nagai K."/>
            <person name="Kimura K."/>
            <person name="Makita H."/>
            <person name="Sekine M."/>
            <person name="Obayashi M."/>
            <person name="Nishi T."/>
            <person name="Shibahara T."/>
            <person name="Tanaka T."/>
            <person name="Ishii S."/>
            <person name="Yamamoto J."/>
            <person name="Saito K."/>
            <person name="Kawai Y."/>
            <person name="Isono Y."/>
            <person name="Nakamura Y."/>
            <person name="Nagahari K."/>
            <person name="Murakami K."/>
            <person name="Yasuda T."/>
            <person name="Iwayanagi T."/>
            <person name="Wagatsuma M."/>
            <person name="Shiratori A."/>
            <person name="Sudo H."/>
            <person name="Hosoiri T."/>
            <person name="Kaku Y."/>
            <person name="Kodaira H."/>
            <person name="Kondo H."/>
            <person name="Sugawara M."/>
            <person name="Takahashi M."/>
            <person name="Kanda K."/>
            <person name="Yokoi T."/>
            <person name="Furuya T."/>
            <person name="Kikkawa E."/>
            <person name="Omura Y."/>
            <person name="Abe K."/>
            <person name="Kamihara K."/>
            <person name="Katsuta N."/>
            <person name="Sato K."/>
            <person name="Tanikawa M."/>
            <person name="Yamazaki M."/>
            <person name="Ninomiya K."/>
            <person name="Ishibashi T."/>
            <person name="Yamashita H."/>
            <person name="Murakawa K."/>
            <person name="Fujimori K."/>
            <person name="Tanai H."/>
            <person name="Kimata M."/>
            <person name="Watanabe M."/>
            <person name="Hiraoka S."/>
            <person name="Chiba Y."/>
            <person name="Ishida S."/>
            <person name="Ono Y."/>
            <person name="Takiguchi S."/>
            <person name="Watanabe S."/>
            <person name="Yosida M."/>
            <person name="Hotuta T."/>
            <person name="Kusano J."/>
            <person name="Kanehori K."/>
            <person name="Takahashi-Fujii A."/>
            <person name="Hara H."/>
            <person name="Tanase T.-O."/>
            <person name="Nomura Y."/>
            <person name="Togiya S."/>
            <person name="Komai F."/>
            <person name="Hara R."/>
            <person name="Takeuchi K."/>
            <person name="Arita M."/>
            <person name="Imose N."/>
            <person name="Musashino K."/>
            <person name="Yuuki H."/>
            <person name="Oshima A."/>
            <person name="Sasaki N."/>
            <person name="Aotsuka S."/>
            <person name="Yoshikawa Y."/>
            <person name="Matsunawa H."/>
            <person name="Ichihara T."/>
            <person name="Shiohata N."/>
            <person name="Sano S."/>
            <person name="Moriya S."/>
            <person name="Momiyama H."/>
            <person name="Satoh N."/>
            <person name="Takami S."/>
            <person name="Terashima Y."/>
            <person name="Suzuki O."/>
            <person name="Nakagawa S."/>
            <person name="Senoh A."/>
            <person name="Mizoguchi H."/>
            <person name="Goto Y."/>
            <person name="Shimizu F."/>
            <person name="Wakebe H."/>
            <person name="Hishigaki H."/>
            <person name="Watanabe T."/>
            <person name="Sugiyama A."/>
            <person name="Takemoto M."/>
            <person name="Kawakami B."/>
            <person name="Yamazaki M."/>
            <person name="Watanabe K."/>
            <person name="Kumagai A."/>
            <person name="Itakura S."/>
            <person name="Fukuzumi Y."/>
            <person name="Fujimori Y."/>
            <person name="Komiyama M."/>
            <person name="Tashiro H."/>
            <person name="Tanigami A."/>
            <person name="Fujiwara T."/>
            <person name="Ono T."/>
            <person name="Yamada K."/>
            <person name="Fujii Y."/>
            <person name="Ozaki K."/>
            <person name="Hirao M."/>
            <person name="Ohmori Y."/>
            <person name="Kawabata A."/>
            <person name="Hikiji T."/>
            <person name="Kobatake N."/>
            <person name="Inagaki H."/>
            <person name="Ikema Y."/>
            <person name="Okamoto S."/>
            <person name="Okitani R."/>
            <person name="Kawakami T."/>
            <person name="Noguchi S."/>
            <person name="Itoh T."/>
            <person name="Shigeta K."/>
            <person name="Senba T."/>
            <person name="Matsumura K."/>
            <person name="Nakajima Y."/>
            <person name="Mizuno T."/>
            <person name="Morinaga M."/>
            <person name="Sasaki M."/>
            <person name="Togashi T."/>
            <person name="Oyama M."/>
            <person name="Hata H."/>
            <person name="Watanabe M."/>
            <person name="Komatsu T."/>
            <person name="Mizushima-Sugano J."/>
            <person name="Satoh T."/>
            <person name="Shirai Y."/>
            <person name="Takahashi Y."/>
            <person name="Nakagawa K."/>
            <person name="Okumura K."/>
            <person name="Nagase T."/>
            <person name="Nomura N."/>
            <person name="Kikuchi H."/>
            <person name="Masuho Y."/>
            <person name="Yamashita R."/>
            <person name="Nakai K."/>
            <person name="Yada T."/>
            <person name="Nakamura Y."/>
            <person name="Ohara O."/>
            <person name="Isogai T."/>
            <person name="Sugano S."/>
        </authorList>
    </citation>
    <scope>PARTIAL NUCLEOTIDE SEQUENCE [LARGE SCALE MRNA] (ISOFORM 2)</scope>
    <source>
        <tissue>Placenta</tissue>
    </source>
</reference>
<reference key="8">
    <citation type="journal article" date="2001" name="Mol. Cell. Biol.">
        <title>SEL-10 is an inhibitor of notch signaling that targets notch for ubiquitin-mediated protein degradation.</title>
        <authorList>
            <person name="Wu G."/>
            <person name="Lyapina S."/>
            <person name="Das I."/>
            <person name="Li J."/>
            <person name="Gurney M."/>
            <person name="Pauley A."/>
            <person name="Chui I."/>
            <person name="Deshaies R.J."/>
            <person name="Kitajewski J."/>
        </authorList>
    </citation>
    <scope>FUNCTION</scope>
    <scope>INTERACTION WITH NOTCH1; NOTCH4 AND SKP1</scope>
</reference>
<reference key="9">
    <citation type="journal article" date="2004" name="EMBO J.">
        <title>Phosphorylation-dependent degradation of c-Myc is mediated by the F-box protein Fbw7.</title>
        <authorList>
            <person name="Yada M."/>
            <person name="Hatakeyama S."/>
            <person name="Kamura T."/>
            <person name="Nishiyama M."/>
            <person name="Tsunematsu R."/>
            <person name="Imaki H."/>
            <person name="Ishida N."/>
            <person name="Okumura F."/>
            <person name="Nakayama K."/>
            <person name="Nakayama K.I."/>
        </authorList>
    </citation>
    <scope>FUNCTION</scope>
    <scope>PATHWAY</scope>
    <scope>COMPONENT OF THE SCF(FBXW7) COMPLEX</scope>
    <scope>INTERACTION WITH MYC</scope>
</reference>
<reference key="10">
    <citation type="journal article" date="2004" name="Science">
        <title>The ubiquitin ligase SCFFbw7 antagonizes apoptotic JNK signaling.</title>
        <authorList>
            <person name="Nateri A.S."/>
            <person name="Riera-Sans L."/>
            <person name="Da Costa C."/>
            <person name="Behrens A."/>
        </authorList>
    </citation>
    <scope>FUNCTION</scope>
    <scope>INTERACTION WITH JUN</scope>
</reference>
<reference key="11">
    <citation type="journal article" date="2005" name="J. Biol. Chem.">
        <title>The SV40 large T antigen contains a decoy phosphodegron that mediates its interactions with Fbw7/hCdc4.</title>
        <authorList>
            <person name="Welcker M."/>
            <person name="Clurman B.E."/>
        </authorList>
    </citation>
    <scope>INTERACTION WITH SV40 LARGE T ANTIGEN (MICROBIAL INFECTION)</scope>
</reference>
<reference key="12">
    <citation type="journal article" date="2007" name="Cell Cycle">
        <title>Fbw7 and Usp28 regulate myc protein stability in response to DNA damage.</title>
        <authorList>
            <person name="Popov N."/>
            <person name="Herold S."/>
            <person name="Llamazares M."/>
            <person name="Schulein C."/>
            <person name="Eilers M."/>
        </authorList>
    </citation>
    <scope>FUNCTION</scope>
    <scope>INTERACTION WITH MYC AND USP28</scope>
</reference>
<reference key="13">
    <citation type="journal article" date="2007" name="Nat. Cell Biol.">
        <title>The ubiquitin-specific protease USP28 is required for MYC stability.</title>
        <authorList>
            <person name="Popov N."/>
            <person name="Wanzel M."/>
            <person name="Madiredjo M."/>
            <person name="Zhang D."/>
            <person name="Beijersbergen R."/>
            <person name="Bernards R."/>
            <person name="Moll R."/>
            <person name="Elledge S.J."/>
            <person name="Eilers M."/>
        </authorList>
    </citation>
    <scope>FUNCTION</scope>
    <scope>INTERACTION WITH MYC AND USP28</scope>
    <scope>SUBCELLULAR LOCATION</scope>
</reference>
<reference key="14">
    <citation type="journal article" date="2007" name="Science">
        <title>ATM and ATR substrate analysis reveals extensive protein networks responsive to DNA damage.</title>
        <authorList>
            <person name="Matsuoka S."/>
            <person name="Ballif B.A."/>
            <person name="Smogorzewska A."/>
            <person name="McDonald E.R. III"/>
            <person name="Hurov K.E."/>
            <person name="Luo J."/>
            <person name="Bakalarski C.E."/>
            <person name="Zhao Z."/>
            <person name="Solimini N."/>
            <person name="Lerenthal Y."/>
            <person name="Shiloh Y."/>
            <person name="Gygi S.P."/>
            <person name="Elledge S.J."/>
        </authorList>
    </citation>
    <scope>IDENTIFICATION BY MASS SPECTROMETRY [LARGE SCALE ANALYSIS]</scope>
    <source>
        <tissue>Embryonic kidney</tissue>
    </source>
</reference>
<reference key="15">
    <citation type="journal article" date="2011" name="J. Cell Sci.">
        <title>Serum- and glucocorticoid-inducible kinase 1 (SGK1) controls Notch1 signaling by downregulation of protein stability through Fbw7 ubiquitin ligase.</title>
        <authorList>
            <person name="Mo J.S."/>
            <person name="Ann E.J."/>
            <person name="Yoon J.H."/>
            <person name="Jung J."/>
            <person name="Choi Y.H."/>
            <person name="Kim H.Y."/>
            <person name="Ahn J.S."/>
            <person name="Kim S.M."/>
            <person name="Kim M.Y."/>
            <person name="Hong J.A."/>
            <person name="Seo M.S."/>
            <person name="Lang F."/>
            <person name="Choi E.J."/>
            <person name="Park H.S."/>
        </authorList>
    </citation>
    <scope>PHOSPHORYLATION AT SER-227 BY SGK1</scope>
    <scope>INTERACTION WITH SGK1 AND NOTCH1</scope>
</reference>
<reference key="16">
    <citation type="journal article" date="2012" name="Mol. Cell">
        <title>Negative regulation of the stability and tumor suppressor function of Fbw7 by the Pin1 prolyl isomerase.</title>
        <authorList>
            <person name="Min S.H."/>
            <person name="Lau A.W."/>
            <person name="Lee T.H."/>
            <person name="Inuzuka H."/>
            <person name="Wei S."/>
            <person name="Huang P."/>
            <person name="Shaik S."/>
            <person name="Lee D.Y."/>
            <person name="Finn G."/>
            <person name="Balastik M."/>
            <person name="Chen C.H."/>
            <person name="Luo M."/>
            <person name="Tron A.E."/>
            <person name="Decaprio J.A."/>
            <person name="Zhou X.Z."/>
            <person name="Wei W."/>
            <person name="Lu K.P."/>
        </authorList>
    </citation>
    <scope>FUNCTION</scope>
    <scope>HOMODIMERIZATION</scope>
    <scope>INTERACTION WITH JUN AND PIN1</scope>
    <scope>PHOSPHORYLATION AT THR-205</scope>
    <scope>UBIQUITINATION</scope>
    <scope>MUTAGENESIS OF SER-159; THR-205; SER-349 AND SER-372</scope>
</reference>
<reference key="17">
    <citation type="journal article" date="2012" name="Mol. Cell">
        <title>Structure of a glomulin-RBX1-CUL1 complex: inhibition of a RING E3 ligase through masking of its E2-binding surface.</title>
        <authorList>
            <person name="Duda D.M."/>
            <person name="Olszewski J.L."/>
            <person name="Tron A.E."/>
            <person name="Hammel M."/>
            <person name="Lambert L.J."/>
            <person name="Waddell M.B."/>
            <person name="Mittag T."/>
            <person name="DeCaprio J.A."/>
            <person name="Schulman B.A."/>
        </authorList>
    </citation>
    <scope>FUNCTION</scope>
    <scope>SUBUNIT</scope>
</reference>
<reference key="18">
    <citation type="journal article" date="2012" name="PLoS ONE">
        <title>The stomatin-like protein SLP-1 and Cdk2 interact with the F-Box protein Fbw7-gamma.</title>
        <authorList>
            <person name="Zhang W."/>
            <person name="MacDonald E.M."/>
            <person name="Koepp D.M."/>
        </authorList>
    </citation>
    <scope>INTERACTION WITH STOML1</scope>
</reference>
<reference key="19">
    <citation type="journal article" date="2013" name="Hum. Mutat.">
        <title>UBE2QL1 is disrupted by a constitutional translocation associated with renal tumor predisposition and is a novel candidate renal tumor suppressor gene.</title>
        <authorList>
            <person name="Wake N.C."/>
            <person name="Ricketts C.J."/>
            <person name="Morris M.R."/>
            <person name="Prigmore E."/>
            <person name="Gribble S.M."/>
            <person name="Skytte A.B."/>
            <person name="Brown M."/>
            <person name="Clarke N."/>
            <person name="Banks R.E."/>
            <person name="Hodgson S."/>
            <person name="Turnell A.S."/>
            <person name="Maher E.R."/>
            <person name="Woodward E.R."/>
        </authorList>
    </citation>
    <scope>INTERACTION WITH UBE2QL1</scope>
</reference>
<reference key="20">
    <citation type="journal article" date="2013" name="Oncotarget">
        <title>FAM83D promotes cell proliferation and motility by downregulating tumor suppressor gene FBXW7.</title>
        <authorList>
            <person name="Wang Z."/>
            <person name="Liu Y."/>
            <person name="Zhang P."/>
            <person name="Zhang W."/>
            <person name="Wang W."/>
            <person name="Curr K."/>
            <person name="Wei G."/>
            <person name="Mao J.H."/>
        </authorList>
    </citation>
    <scope>INTERACTION WITH FAM83D</scope>
</reference>
<reference key="21">
    <citation type="journal article" date="2015" name="J. Biol. Chem.">
        <title>Rictor Undergoes Glycogen Synthase Kinase 3 (GSK3)-dependent, FBXW7-mediated Ubiquitination and Proteasomal Degradation.</title>
        <authorList>
            <person name="Koo J."/>
            <person name="Wu X."/>
            <person name="Mao Z."/>
            <person name="Khuri F.R."/>
            <person name="Sun S.Y."/>
        </authorList>
    </citation>
    <scope>FUNCTION</scope>
    <scope>PATHWAY</scope>
    <scope>INTERACTION WITH RICTOR</scope>
</reference>
<reference key="22">
    <citation type="journal article" date="2015" name="Proc. Natl. Acad. Sci. U.S.A.">
        <title>The nucleolar ubiquitin-specific protease USP36 deubiquitinates and stabilizes c-Myc.</title>
        <authorList>
            <person name="Sun X.X."/>
            <person name="He X."/>
            <person name="Yin L."/>
            <person name="Komada M."/>
            <person name="Sears R.C."/>
            <person name="Dai M.S."/>
        </authorList>
    </citation>
    <scope>FUNCTION (ISOFORM 3)</scope>
    <scope>INTERACTION WITH MYC AND USP28 (ISOFORM 3)</scope>
    <scope>SUBCELLULAR LOCATION (ISOFORM 3)</scope>
</reference>
<reference key="23">
    <citation type="journal article" date="2022" name="Cancer Sci.">
        <title>CDK1/FBXW7 facilitates degradation and ubiquitination of MLST8 to inhibit progression of renal cell carcinoma.</title>
        <authorList>
            <person name="Zhang E."/>
            <person name="Chen S."/>
            <person name="Tang H."/>
            <person name="Fei C."/>
            <person name="Yuan Z."/>
            <person name="Mu X."/>
            <person name="Qin Y."/>
            <person name="Liu H."/>
            <person name="Fan Y."/>
            <person name="Tan M."/>
            <person name="Wang X."/>
        </authorList>
    </citation>
    <scope>FUNCTION</scope>
    <scope>PATHWAY</scope>
    <scope>IDENTIFICATION IN SCF COMPLEX</scope>
</reference>
<reference key="24">
    <citation type="journal article" date="2016" name="Cell">
        <title>Circadian amplitude regulation via FBXW7-targeted REV-ERBalpha degradation.</title>
        <authorList>
            <person name="Zhao X."/>
            <person name="Hirota T."/>
            <person name="Han X."/>
            <person name="Cho H."/>
            <person name="Chong L.W."/>
            <person name="Lamia K."/>
            <person name="Liu S."/>
            <person name="Atkins A.R."/>
            <person name="Banayo E."/>
            <person name="Liddle C."/>
            <person name="Yu R.T."/>
            <person name="Yates J.R. III"/>
            <person name="Kay S.A."/>
            <person name="Downes M."/>
            <person name="Evans R.M."/>
        </authorList>
    </citation>
    <scope>FUNCTION</scope>
    <scope>INTERACTION WITH NR1D1</scope>
</reference>
<reference key="25">
    <citation type="journal article" date="2016" name="EMBO J.">
        <title>Synaptonuclear messenger PRR7 inhibits c-Jun ubiquitination and regulates NMDA-mediated excitotoxicity.</title>
        <authorList>
            <person name="Kravchick D.O."/>
            <person name="Karpova A."/>
            <person name="Hrdinka M."/>
            <person name="Lopez-Rojas J."/>
            <person name="Iacobas S."/>
            <person name="Carbonell A.U."/>
            <person name="Iacobas D.A."/>
            <person name="Kreutz M.R."/>
            <person name="Jordan B.A."/>
        </authorList>
    </citation>
    <scope>IDENTIFICATION IN COMPLEX WITH JUN AND PRR7</scope>
    <scope>INTERACTION WITH JUN AND PRR7</scope>
</reference>
<reference key="26">
    <citation type="journal article" date="2016" name="Mol. Cell">
        <title>FBXW7 facilitates nonhomologous end-joining via K63-linked polyubiquitylation of XRCC4.</title>
        <authorList>
            <person name="Zhang Q."/>
            <person name="Karnak D."/>
            <person name="Tan M."/>
            <person name="Lawrence T.S."/>
            <person name="Morgan M.A."/>
            <person name="Sun Y."/>
        </authorList>
    </citation>
    <scope>FUNCTION</scope>
    <scope>IDENTIFICATION IN SCF COMPLEX</scope>
    <scope>SUBCELLULAR LOCATION</scope>
    <scope>PHOSPHORYLATION AT SER-26</scope>
    <scope>MUTAGENESIS OF SER-26 AND SER-72</scope>
</reference>
<reference key="27">
    <citation type="journal article" date="2016" name="Proc. Natl. Acad. Sci. U.S.A.">
        <title>Structural basis of N-Myc binding by Aurora-A and its destabilization by kinase inhibitors.</title>
        <authorList>
            <person name="Richards M.W."/>
            <person name="Burgess S.G."/>
            <person name="Poon E."/>
            <person name="Carstensen A."/>
            <person name="Eilers M."/>
            <person name="Chesler L."/>
            <person name="Bayliss R."/>
        </authorList>
    </citation>
    <scope>INTERACTION WITH MYCN</scope>
</reference>
<reference key="28">
    <citation type="journal article" date="2017" name="EMBO J.">
        <title>The pseudophosphatase STYX targets the F-box of FBXW7 and inhibits SCFFBXW7 function.</title>
        <authorList>
            <person name="Reiterer V."/>
            <person name="Figueras-Puig C."/>
            <person name="Le Guerroue F."/>
            <person name="Confalonieri S."/>
            <person name="Vecchi M."/>
            <person name="Jalapothu D."/>
            <person name="Kanse S.M."/>
            <person name="Deshaies R.J."/>
            <person name="Di Fiore P.P."/>
            <person name="Behrends C."/>
            <person name="Farhan H."/>
        </authorList>
    </citation>
    <scope>FUNCTION</scope>
    <scope>INTERACTION WITH STYX</scope>
    <scope>IDENTIFICATION IN THE SCF(FBXW7) COMPLEX</scope>
    <scope>SUBUNIT</scope>
    <scope>SUBCELLULAR LOCATION</scope>
    <scope>IDENTIFICATION BY MASS SPECTROMETRY</scope>
    <scope>CHARACTERIZATION OF VARIANT CYS-465</scope>
</reference>
<reference key="29">
    <citation type="journal article" date="2017" name="Mol. Cell">
        <title>NOTCH2 Hajdu-Cheney mutations escape SCFFBW7-dependent proteolysis to promote osteoporosis.</title>
        <authorList>
            <person name="Fukushima H."/>
            <person name="Shimizu K."/>
            <person name="Watahiki A."/>
            <person name="Hoshikawa S."/>
            <person name="Kosho T."/>
            <person name="Oba D."/>
            <person name="Sakano S."/>
            <person name="Arakaki M."/>
            <person name="Yamada A."/>
            <person name="Nagashima K."/>
            <person name="Okabe K."/>
            <person name="Fukumoto S."/>
            <person name="Jimi E."/>
            <person name="Bigas A."/>
            <person name="Nakayama K.I."/>
            <person name="Nakayama K."/>
            <person name="Aoki Y."/>
            <person name="Wei W."/>
            <person name="Inuzuka H."/>
        </authorList>
    </citation>
    <scope>FUNCTION</scope>
    <scope>INTERACTION WITH NOTCH2</scope>
</reference>
<reference key="30">
    <citation type="journal article" date="2021" name="Int. J. Biochem.">
        <title>The deubiquitinase USP38 promotes cell proliferation through stabilizing c-Myc.</title>
        <authorList>
            <person name="Xu Z."/>
            <person name="Hu H."/>
            <person name="Fang D."/>
            <person name="Wang J."/>
            <person name="Zhao K."/>
        </authorList>
    </citation>
    <scope>FUNCTION</scope>
    <scope>INTERACTION WITH MYC AND USP38</scope>
</reference>
<reference key="31">
    <citation type="journal article" date="2022" name="Am. J. Hum. Genet.">
        <title>Germline variants in tumor suppressor FBXW7 lead to impaired ubiquitination and a neurodevelopmental syndrome.</title>
        <authorList>
            <consortium name="TUDP Study Group"/>
            <consortium name="Broad Center for Mendelian Genomics"/>
            <person name="Stephenson S.E.M."/>
            <person name="Costain G."/>
            <person name="Blok L.E.R."/>
            <person name="Silk M.A."/>
            <person name="Nguyen T.B."/>
            <person name="Dong X."/>
            <person name="Alhuzaimi D.E."/>
            <person name="Dowling J.J."/>
            <person name="Walker S."/>
            <person name="Amburgey K."/>
            <person name="Hayeems R.Z."/>
            <person name="Rodan L.H."/>
            <person name="Schwartz M.A."/>
            <person name="Picker J."/>
            <person name="Lynch S.A."/>
            <person name="Gupta A."/>
            <person name="Rasmussen K.J."/>
            <person name="Schimmenti L.A."/>
            <person name="Klee E.W."/>
            <person name="Niu Z."/>
            <person name="Agre K.E."/>
            <person name="Chilton I."/>
            <person name="Chung W.K."/>
            <person name="Revah-Politi A."/>
            <person name="Au P.Y.B."/>
            <person name="Griffith C."/>
            <person name="Racobaldo M."/>
            <person name="Raas-Rothschild A."/>
            <person name="Ben Zeev B."/>
            <person name="Barel O."/>
            <person name="Moutton S."/>
            <person name="Morice-Picard F."/>
            <person name="Carmignac V."/>
            <person name="Cornaton J."/>
            <person name="Marle N."/>
            <person name="Devinsky O."/>
            <person name="Stimach C."/>
            <person name="Wechsler S.B."/>
            <person name="Hainline B.E."/>
            <person name="Sapp K."/>
            <person name="Willems M."/>
            <person name="Bruel A.L."/>
            <person name="Dias K.R."/>
            <person name="Evans C.A."/>
            <person name="Roscioli T."/>
            <person name="Sachdev R."/>
            <person name="Temple S.E.L."/>
            <person name="Zhu Y."/>
            <person name="Baker J.J."/>
            <person name="Scheffer I.E."/>
            <person name="Gardiner F.J."/>
            <person name="Schneider A.L."/>
            <person name="Muir A.M."/>
            <person name="Mefford H.C."/>
            <person name="Crunk A."/>
            <person name="Heise E.M."/>
            <person name="Millan F."/>
            <person name="Monaghan K.G."/>
            <person name="Person R."/>
            <person name="Rhodes L."/>
            <person name="Richards S."/>
            <person name="Wentzensen I.M."/>
            <person name="Cogne B."/>
            <person name="Isidor B."/>
            <person name="Nizon M."/>
            <person name="Vincent M."/>
            <person name="Besnard T."/>
            <person name="Piton A."/>
            <person name="Marcelis C."/>
            <person name="Kato K."/>
            <person name="Koyama N."/>
            <person name="Ogi T."/>
            <person name="Goh E.S."/>
            <person name="Richmond C."/>
            <person name="Amor D.J."/>
            <person name="Boyce J.O."/>
            <person name="Morgan A.T."/>
            <person name="Hildebrand M.S."/>
            <person name="Kaspi A."/>
            <person name="Bahlo M."/>
            <person name="Fridriksdottir R."/>
            <person name="Katrinardottir H."/>
            <person name="Sulem P."/>
            <person name="Stefansson K."/>
            <person name="Bjoernsson H.T."/>
            <person name="Mandelstam S."/>
            <person name="Morleo M."/>
            <person name="Mariani M."/>
            <person name="Scala M."/>
            <person name="Accogli A."/>
            <person name="Torella A."/>
            <person name="Capra V."/>
            <person name="Wallis M."/>
            <person name="Jansen S."/>
            <person name="Weisfisz Q."/>
            <person name="de Haan H."/>
            <person name="Sadedin S."/>
            <person name="Lim S.C."/>
            <person name="White S.M."/>
            <person name="Ascher D.B."/>
            <person name="Schenck A."/>
            <person name="Lockhart P.J."/>
            <person name="Christodoulou J."/>
            <person name="Tan T.Y."/>
        </authorList>
    </citation>
    <scope>INVOLVEMENT IN DEDHIL</scope>
    <scope>VARIANTS DEDHIL ALA-416; ILE-416; LEU-420; ARG-423; GLY-441; PRO-462; HIS-465; GLN-479; GLY-480; HIS-505; GLY-544; TYR-580; ALA-582; VAL-599; VAL-608; VAL-626; ARG-640; 647-LYS--LYS-707 DEL; PRO-674; TRP-674; GLN-689 AND TRP-689</scope>
    <scope>CHARACTERIZATION OF VARIANTS DEDHIL ARG-423; GLY-480; GLY-544; ARG-640; PRO-674; TRP-674 AND GLN-689</scope>
    <scope>FUNCTION</scope>
</reference>
<reference key="32">
    <citation type="journal article" date="2007" name="Mol. Cell">
        <title>Structure of a Fbw7-Skp1-cyclin E complex: multisite-phosphorylated substrate recognition by SCF ubiquitin ligases.</title>
        <authorList>
            <person name="Hao B."/>
            <person name="Oehlmann S."/>
            <person name="Sowa M.E."/>
            <person name="Harper J.W."/>
            <person name="Pavletich N.P."/>
        </authorList>
    </citation>
    <scope>X-RAY CRYSTALLOGRAPHY (2.50 ANGSTROMS) OF 263-707 IN COMPLEX WITH SKP1 AND CCNE1 PHOSPHORYLATED PEPTIDE</scope>
    <scope>FUNCTION</scope>
    <scope>DOMAIN</scope>
    <scope>SUBUNIT</scope>
    <scope>MUTAGENESIS OF 252-ALA--ILE-257</scope>
</reference>
<reference evidence="48" key="33">
    <citation type="journal article" date="2016" name="Proc. Natl. Acad. Sci. U.S.A.">
        <title>Inhibition of SCF ubiquitin ligases by engineered ubiquitin variants that target the Cul1 binding site on the Skp1-F-box interface.</title>
        <authorList>
            <person name="Gorelik M."/>
            <person name="Orlicky S."/>
            <person name="Sartori M.A."/>
            <person name="Tang X."/>
            <person name="Marcon E."/>
            <person name="Kurinov I."/>
            <person name="Greenblatt J.F."/>
            <person name="Tyers M."/>
            <person name="Moffat J."/>
            <person name="Sicheri F."/>
            <person name="Sidhu S.S."/>
        </authorList>
    </citation>
    <scope>X-RAY CRYSTALLOGRAPHY (2.50 ANGSTROMS) OF 263-323 IN COMPLEX WITH SKIP1 AND UBIQUITIN</scope>
    <scope>FUNCTION</scope>
    <scope>SUBUNIT</scope>
</reference>
<reference evidence="49" key="34">
    <citation type="journal article" date="2018" name="Mol. Psychiatry">
        <title>FBXW7 regulates DISC1 stability via the ubiquitin-proteosome system.</title>
        <authorList>
            <person name="Yalla K."/>
            <person name="Elliott C."/>
            <person name="Day J.P."/>
            <person name="Findlay J."/>
            <person name="Barratt S."/>
            <person name="Hughes Z.A."/>
            <person name="Wilson L."/>
            <person name="Whiteley E."/>
            <person name="Popiolek M."/>
            <person name="Li Y."/>
            <person name="Dunlop J."/>
            <person name="Killick R."/>
            <person name="Adams D.R."/>
            <person name="Brandon N.J."/>
            <person name="Houslay M.D."/>
            <person name="Hao B."/>
            <person name="Baillie G.S."/>
        </authorList>
    </citation>
    <scope>X-RAY CRYSTALLOGRAPHY (2.60 ANGSTROMS) OF 263-706 IN COMPLEX WITH SKIP1 AND DISC1 PEPTIDE</scope>
    <scope>FUNCTION</scope>
</reference>
<reference key="35">
    <citation type="journal article" date="2006" name="Science">
        <title>The consensus coding sequences of human breast and colorectal cancers.</title>
        <authorList>
            <person name="Sjoeblom T."/>
            <person name="Jones S."/>
            <person name="Wood L.D."/>
            <person name="Parsons D.W."/>
            <person name="Lin J."/>
            <person name="Barber T.D."/>
            <person name="Mandelker D."/>
            <person name="Leary R.J."/>
            <person name="Ptak J."/>
            <person name="Silliman N."/>
            <person name="Szabo S."/>
            <person name="Buckhaults P."/>
            <person name="Farrell C."/>
            <person name="Meeh P."/>
            <person name="Markowitz S.D."/>
            <person name="Willis J."/>
            <person name="Dawson D."/>
            <person name="Willson J.K.V."/>
            <person name="Gazdar A.F."/>
            <person name="Hartigan J."/>
            <person name="Wu L."/>
            <person name="Liu C."/>
            <person name="Parmigiani G."/>
            <person name="Park B.H."/>
            <person name="Bachman K.E."/>
            <person name="Papadopoulos N."/>
            <person name="Vogelstein B."/>
            <person name="Kinzler K.W."/>
            <person name="Velculescu V.E."/>
        </authorList>
    </citation>
    <scope>VARIANTS [LARGE SCALE ANALYSIS] HIS-465; LEU-505 AND LEU-582</scope>
</reference>
<reference key="36">
    <citation type="journal article" date="2007" name="Breast Cancer Res.">
        <title>Somatic sequence alterations in twenty-one genes selected by expression profile analysis of breast carcinomas.</title>
        <authorList>
            <person name="Chanock S.J."/>
            <person name="Burdett L."/>
            <person name="Yeager M."/>
            <person name="Llaca V."/>
            <person name="Langeroed A."/>
            <person name="Presswalla S."/>
            <person name="Kaaresen R."/>
            <person name="Strausberg R.L."/>
            <person name="Gerhard D.S."/>
            <person name="Kristensen V."/>
            <person name="Perou C.M."/>
            <person name="Boerresen-Dale A.-L."/>
        </authorList>
    </citation>
    <scope>VARIANT LYS-117</scope>
</reference>
<organism>
    <name type="scientific">Homo sapiens</name>
    <name type="common">Human</name>
    <dbReference type="NCBI Taxonomy" id="9606"/>
    <lineage>
        <taxon>Eukaryota</taxon>
        <taxon>Metazoa</taxon>
        <taxon>Chordata</taxon>
        <taxon>Craniata</taxon>
        <taxon>Vertebrata</taxon>
        <taxon>Euteleostomi</taxon>
        <taxon>Mammalia</taxon>
        <taxon>Eutheria</taxon>
        <taxon>Euarchontoglires</taxon>
        <taxon>Primates</taxon>
        <taxon>Haplorrhini</taxon>
        <taxon>Catarrhini</taxon>
        <taxon>Hominidae</taxon>
        <taxon>Homo</taxon>
    </lineage>
</organism>
<keyword id="KW-0002">3D-structure</keyword>
<keyword id="KW-0025">Alternative splicing</keyword>
<keyword id="KW-0090">Biological rhythms</keyword>
<keyword id="KW-0158">Chromosome</keyword>
<keyword id="KW-0963">Cytoplasm</keyword>
<keyword id="KW-0225">Disease variant</keyword>
<keyword id="KW-0227">DNA damage</keyword>
<keyword id="KW-0234">DNA repair</keyword>
<keyword id="KW-0945">Host-virus interaction</keyword>
<keyword id="KW-0991">Intellectual disability</keyword>
<keyword id="KW-0539">Nucleus</keyword>
<keyword id="KW-0597">Phosphoprotein</keyword>
<keyword id="KW-1267">Proteomics identification</keyword>
<keyword id="KW-1185">Reference proteome</keyword>
<keyword id="KW-0677">Repeat</keyword>
<keyword id="KW-0832">Ubl conjugation</keyword>
<keyword id="KW-0833">Ubl conjugation pathway</keyword>
<keyword id="KW-0853">WD repeat</keyword>
<protein>
    <recommendedName>
        <fullName evidence="41">F-box/WD repeat-containing protein 7</fullName>
    </recommendedName>
    <alternativeName>
        <fullName evidence="36">Archipelago homolog</fullName>
        <shortName evidence="36">hAgo</shortName>
    </alternativeName>
    <alternativeName>
        <fullName evidence="41">F-box and WD-40 domain-containing protein 7</fullName>
    </alternativeName>
    <alternativeName>
        <fullName evidence="42">F-box protein FBX30</fullName>
    </alternativeName>
    <alternativeName>
        <fullName evidence="38">SEL-10</fullName>
    </alternativeName>
    <alternativeName>
        <fullName evidence="37">hCdc4</fullName>
    </alternativeName>
</protein>
<evidence type="ECO:0000250" key="1">
    <source>
        <dbReference type="UniProtKB" id="Q8VBV4"/>
    </source>
</evidence>
<evidence type="ECO:0000255" key="2">
    <source>
        <dbReference type="PROSITE-ProRule" id="PRU00080"/>
    </source>
</evidence>
<evidence type="ECO:0000256" key="3">
    <source>
        <dbReference type="SAM" id="MobiDB-lite"/>
    </source>
</evidence>
<evidence type="ECO:0000269" key="4">
    <source>
    </source>
</evidence>
<evidence type="ECO:0000269" key="5">
    <source>
    </source>
</evidence>
<evidence type="ECO:0000269" key="6">
    <source>
    </source>
</evidence>
<evidence type="ECO:0000269" key="7">
    <source>
    </source>
</evidence>
<evidence type="ECO:0000269" key="8">
    <source>
    </source>
</evidence>
<evidence type="ECO:0000269" key="9">
    <source>
    </source>
</evidence>
<evidence type="ECO:0000269" key="10">
    <source>
    </source>
</evidence>
<evidence type="ECO:0000269" key="11">
    <source>
    </source>
</evidence>
<evidence type="ECO:0000269" key="12">
    <source>
    </source>
</evidence>
<evidence type="ECO:0000269" key="13">
    <source>
    </source>
</evidence>
<evidence type="ECO:0000269" key="14">
    <source>
    </source>
</evidence>
<evidence type="ECO:0000269" key="15">
    <source>
    </source>
</evidence>
<evidence type="ECO:0000269" key="16">
    <source>
    </source>
</evidence>
<evidence type="ECO:0000269" key="17">
    <source>
    </source>
</evidence>
<evidence type="ECO:0000269" key="18">
    <source>
    </source>
</evidence>
<evidence type="ECO:0000269" key="19">
    <source>
    </source>
</evidence>
<evidence type="ECO:0000269" key="20">
    <source>
    </source>
</evidence>
<evidence type="ECO:0000269" key="21">
    <source>
    </source>
</evidence>
<evidence type="ECO:0000269" key="22">
    <source>
    </source>
</evidence>
<evidence type="ECO:0000269" key="23">
    <source>
    </source>
</evidence>
<evidence type="ECO:0000269" key="24">
    <source>
    </source>
</evidence>
<evidence type="ECO:0000269" key="25">
    <source>
    </source>
</evidence>
<evidence type="ECO:0000269" key="26">
    <source>
    </source>
</evidence>
<evidence type="ECO:0000269" key="27">
    <source>
    </source>
</evidence>
<evidence type="ECO:0000269" key="28">
    <source>
    </source>
</evidence>
<evidence type="ECO:0000269" key="29">
    <source>
    </source>
</evidence>
<evidence type="ECO:0000269" key="30">
    <source>
    </source>
</evidence>
<evidence type="ECO:0000269" key="31">
    <source>
    </source>
</evidence>
<evidence type="ECO:0000269" key="32">
    <source>
    </source>
</evidence>
<evidence type="ECO:0000269" key="33">
    <source>
    </source>
</evidence>
<evidence type="ECO:0000269" key="34">
    <source>
    </source>
</evidence>
<evidence type="ECO:0000303" key="35">
    <source>
    </source>
</evidence>
<evidence type="ECO:0000303" key="36">
    <source>
    </source>
</evidence>
<evidence type="ECO:0000303" key="37">
    <source>
    </source>
</evidence>
<evidence type="ECO:0000303" key="38">
    <source>
    </source>
</evidence>
<evidence type="ECO:0000303" key="39">
    <source>
    </source>
</evidence>
<evidence type="ECO:0000303" key="40">
    <source>
    </source>
</evidence>
<evidence type="ECO:0000305" key="41"/>
<evidence type="ECO:0000305" key="42">
    <source>
    </source>
</evidence>
<evidence type="ECO:0000305" key="43">
    <source>
    </source>
</evidence>
<evidence type="ECO:0000312" key="44">
    <source>
        <dbReference type="EMBL" id="AAK57547.1"/>
    </source>
</evidence>
<evidence type="ECO:0000312" key="45">
    <source>
        <dbReference type="EMBL" id="AAK60269.1"/>
    </source>
</evidence>
<evidence type="ECO:0000312" key="46">
    <source>
        <dbReference type="EMBL" id="AAL07271.1"/>
    </source>
</evidence>
<evidence type="ECO:0000312" key="47">
    <source>
        <dbReference type="HGNC" id="HGNC:16712"/>
    </source>
</evidence>
<evidence type="ECO:0007744" key="48">
    <source>
        <dbReference type="PDB" id="5IBK"/>
    </source>
</evidence>
<evidence type="ECO:0007744" key="49">
    <source>
        <dbReference type="PDB" id="5V4B"/>
    </source>
</evidence>
<evidence type="ECO:0007829" key="50">
    <source>
        <dbReference type="PDB" id="2OVR"/>
    </source>
</evidence>
<comment type="function">
    <text evidence="5 6 8 9 13 14 15 17 18 22 23 24 25 26 29 30 31 32 33 34 43">Substrate recognition component of a SCF (SKP1-CUL1-F-box protein) E3 ubiquitin-protein ligase complex which mediates the ubiquitination and subsequent proteasomal degradation of target proteins (PubMed:17434132, PubMed:22748924, PubMed:26976582, PubMed:28727686, PubMed:34741373, PubMed:35395208). Recognizes and binds phosphorylated sites/phosphodegrons within target proteins and thereafter brings them to the SCF complex for ubiquitination (PubMed:17434132, PubMed:22748924, PubMed:26774286, PubMed:26976582, PubMed:28727686, PubMed:34741373). Identified substrates include cyclin-E (CCNE1 or CCNE2), DISC1, JUN, MYC, NOTCH1 released notch intracellular domain (NICD), NFE2L1, NOTCH2, MCL1, MLST8, RICTOR, and probably PSEN1 (PubMed:11565034, PubMed:11585921, PubMed:12354302, PubMed:14739463, PubMed:15103331, PubMed:17558397, PubMed:17873522, PubMed:22608923, PubMed:22748924, PubMed:25775507, PubMed:25897075, PubMed:26976582, PubMed:28007894, PubMed:28727686, PubMed:29149593, PubMed:34102342). Acts as a negative regulator of JNK signaling by binding to phosphorylated JUN and promoting its ubiquitination and subsequent degradation (PubMed:14739463). Involved in bone homeostasis and negative regulation of osteoclast differentiation (PubMed:29149593). Regulates the amplitude of the cyclic expression of hepatic core clock genes and genes involved in lipid and glucose metabolism via ubiquitination and proteasomal degradation of their transcriptional repressor NR1D1; CDK1-dependent phosphorylation of NR1D1 is necessary for SCF(FBXW7)-mediated ubiquitination (PubMed:27238018). Also able to promote 'Lys-63'-linked ubiquitination in response to DNA damage (PubMed:26774286). The SCF(FBXW7) complex facilitates double-strand break repair following phosphorylation by ATM: phosphorylation promotes localization to sites of double-strand breaks and 'Lys-63'-linked ubiquitination of phosphorylated XRCC4, enhancing DNA non-homologous end joining (PubMed:26774286).</text>
</comment>
<comment type="pathway">
    <text evidence="9 23 33">Protein modification; protein ubiquitination.</text>
</comment>
<comment type="subunit">
    <text evidence="1 5 6 7 8 9 10 13 14 15 16 17 19 20 21 23 24 26 27 28 29 31 32 33">Homodimer; homodimerization plays a role in substrate binding and/or ubiquitination and degradation (PubMed:17434132, PubMed:22608923, PubMed:28007894). Component of the SCF(FBXW7) complex consisting of CUL1, RBX1, SKP1 and FBXW7 (PubMed:11565034, PubMed:15103331, PubMed:22748924, PubMed:26774286, PubMed:26976582, PubMed:28007894, PubMed:28727686, PubMed:34741373). Interacts (via F-box domain) with SKP1 (PubMed:11585921, PubMed:17434132, PubMed:26976582, PubMed:28007894, PubMed:28727686). Interacts (via F-box domain) with pseudophosphatase STYX; the interaction is direct and prevents FBXW7 interaction with SKP1 (PubMed:28007894). Interacts with cyclin-E (CCNE1 or CCNE2) (PubMed:11565034, PubMed:17434132). Interacts with PSEN1 (PubMed:12354302). Forms a trimeric complex with NOTCH1 and SGK1 (PubMed:21147854). Interacts with NOTCH1 intracellular domain/NICD and NOTCH4 intracellular domain/NICD (PubMed:11585921). Interacts with NOTCH2 intracellular domain (N2ICD) (PubMed:29149593). Interacts with MYC (when phosphorylated) (PubMed:17873522, PubMed:25775507, PubMed:28007894). Interacts with USP28, counteracting ubiquitination of MYC (PubMed:17873522). Interacts with JUN (PubMed:14739463, PubMed:22608923). Found in a complex with JUN and PRR7 (PubMed:27458189). Interacts with JUN and PRR7; the interaction inhibits ubiquitination-mediated JUN degradation, promoting its phosphorylation and transcriptional activity (PubMed:27458189). Interacts (when phosphorylated at Thr-205) with PIN1, disrupting FBXW7 dimerization and promoting FBXW7 autoubiquitination and degradation (PubMed:22608923). Interacts with UBE2QL1 (PubMed:24000165). Interacts with FAM83D; promotes FBXW7 degradation (PubMed:24344117). Interacts with MYCN; FBXW7 competes with AURKA for binding to unphosphorylated MYCN but not for binding to phosphorylated MYCN (PubMed:27837025). Interacts with STOML1 (PubMed:23082202). Interacts with NFE2L1 (By similarity). Interacts with USP36, counteracting ubiquitination of MYC (PubMed:25775507). Interacts with NR1D1 (PubMed:27238018). Interacts with RICTOR; mediates RICTOR ubiquitination and degradation (PubMed:25897075). Interacts with USP38, counteracting ubiquitination of MYC (PubMed:34102342).</text>
</comment>
<comment type="subunit">
    <text evidence="10">(Microbial infection) Interacts (via WD repeats) with SV40 large T antigen (via CPD region).</text>
</comment>
<comment type="interaction">
    <interactant intactId="EBI-359574">
        <id>Q969H0</id>
    </interactant>
    <interactant intactId="EBI-1045350">
        <id>Q16204</id>
        <label>CCDC6</label>
    </interactant>
    <organismsDiffer>false</organismsDiffer>
    <experiments>9</experiments>
</comment>
<comment type="interaction">
    <interactant intactId="EBI-359574">
        <id>Q969H0</id>
    </interactant>
    <interactant intactId="EBI-359390">
        <id>Q13616</id>
        <label>CUL1</label>
    </interactant>
    <organismsDiffer>false</organismsDiffer>
    <experiments>9</experiments>
</comment>
<comment type="interaction">
    <interactant intactId="EBI-359574">
        <id>Q969H0</id>
    </interactant>
    <interactant intactId="EBI-359574">
        <id>Q969H0</id>
        <label>FBXW7</label>
    </interactant>
    <organismsDiffer>false</organismsDiffer>
    <experiments>3</experiments>
</comment>
<comment type="interaction">
    <interactant intactId="EBI-359574">
        <id>Q969H0</id>
    </interactant>
    <interactant intactId="EBI-447544">
        <id>P01106</id>
        <label>MYC</label>
    </interactant>
    <organismsDiffer>false</organismsDiffer>
    <experiments>7</experiments>
</comment>
<comment type="interaction">
    <interactant intactId="EBI-359574">
        <id>Q969H0</id>
    </interactant>
    <interactant intactId="EBI-636374">
        <id>P46531</id>
        <label>NOTCH1</label>
    </interactant>
    <organismsDiffer>false</organismsDiffer>
    <experiments>11</experiments>
</comment>
<comment type="interaction">
    <interactant intactId="EBI-359574">
        <id>Q969H0</id>
    </interactant>
    <interactant intactId="EBI-307486">
        <id>P63208</id>
        <label>SKP1</label>
    </interactant>
    <organismsDiffer>false</organismsDiffer>
    <experiments>11</experiments>
</comment>
<comment type="interaction">
    <interactant intactId="EBI-359574">
        <id>Q969H0</id>
    </interactant>
    <interactant intactId="EBI-307497">
        <id>P63208-1</id>
        <label>SKP1</label>
    </interactant>
    <organismsDiffer>false</organismsDiffer>
    <experiments>2</experiments>
</comment>
<comment type="interaction">
    <interactant intactId="EBI-359574">
        <id>Q969H0</id>
    </interactant>
    <interactant intactId="EBI-20979851">
        <id>Q8WUJ0</id>
        <label>STYX</label>
    </interactant>
    <organismsDiffer>false</organismsDiffer>
    <experiments>10</experiments>
</comment>
<comment type="interaction">
    <interactant intactId="EBI-359574">
        <id>Q969H0</id>
    </interactant>
    <interactant intactId="EBI-647919">
        <id>Q9Z0Z7</id>
        <label>Klf5</label>
    </interactant>
    <organismsDiffer>true</organismsDiffer>
    <experiments>2</experiments>
</comment>
<comment type="interaction">
    <interactant intactId="EBI-359574">
        <id>Q969H0</id>
    </interactant>
    <interactant intactId="EBI-15662601">
        <id>Q91LX9</id>
    </interactant>
    <organismsDiffer>true</organismsDiffer>
    <experiments>5</experiments>
</comment>
<comment type="interaction">
    <interactant intactId="EBI-6162410">
        <id>Q969H0-1</id>
    </interactant>
    <interactant intactId="EBI-20979851">
        <id>Q8WUJ0</id>
        <label>STYX</label>
    </interactant>
    <organismsDiffer>false</organismsDiffer>
    <experiments>4</experiments>
</comment>
<comment type="interaction">
    <interactant intactId="EBI-359594">
        <id>Q969H0-2</id>
    </interactant>
    <interactant intactId="EBI-25834258">
        <id>P13051-2</id>
        <label>UNG</label>
    </interactant>
    <organismsDiffer>false</organismsDiffer>
    <experiments>3</experiments>
</comment>
<comment type="interaction">
    <interactant intactId="EBI-6502391">
        <id>Q969H0-4</id>
    </interactant>
    <interactant intactId="EBI-375096">
        <id>P24941</id>
        <label>CDK2</label>
    </interactant>
    <organismsDiffer>false</organismsDiffer>
    <experiments>2</experiments>
</comment>
<comment type="interaction">
    <interactant intactId="EBI-6502391">
        <id>Q969H0-4</id>
    </interactant>
    <interactant intactId="EBI-2681162">
        <id>Q9UBI4</id>
        <label>STOML1</label>
    </interactant>
    <organismsDiffer>false</organismsDiffer>
    <experiments>3</experiments>
</comment>
<comment type="subcellular location">
    <molecule>Isoform 1</molecule>
    <subcellularLocation>
        <location evidence="14 22 29">Nucleus</location>
        <location evidence="14 22 29">Nucleoplasm</location>
    </subcellularLocation>
    <subcellularLocation>
        <location evidence="24">Chromosome</location>
    </subcellularLocation>
    <text evidence="24">Localizes to site of double-strand breaks following phosphorylation by ATM.</text>
</comment>
<comment type="subcellular location">
    <molecule>Isoform 2</molecule>
    <subcellularLocation>
        <location evidence="14 29">Cytoplasm</location>
    </subcellularLocation>
</comment>
<comment type="subcellular location">
    <molecule>Isoform 3</molecule>
    <subcellularLocation>
        <location evidence="14 22 29">Nucleus</location>
        <location evidence="14 22 29">Nucleolus</location>
    </subcellularLocation>
</comment>
<comment type="alternative products">
    <event type="alternative splicing"/>
    <isoform>
        <id>Q969H0-1</id>
        <name>1</name>
        <name evidence="36">Archipelago alpha</name>
        <name evidence="39 40">FBW7alpha</name>
        <name>110K</name>
        <name>common</name>
        <sequence type="displayed"/>
    </isoform>
    <isoform>
        <id>Q969H0-2</id>
        <name>2</name>
        <name evidence="36">Archipelago beta</name>
        <name evidence="39">FBW7beta</name>
        <name>69K</name>
        <sequence type="described" ref="VSP_009483 VSP_009484"/>
    </isoform>
    <isoform>
        <id>Q969H0-4</id>
        <name>3</name>
        <name>Archipelago gamma</name>
        <name evidence="39 40">FBW7gamma</name>
        <name>Hippocampal</name>
        <sequence type="described" ref="VSP_009482 VSP_009485"/>
    </isoform>
</comment>
<comment type="tissue specificity">
    <molecule>Isoform 1</molecule>
    <text evidence="7">Widely expressed.</text>
</comment>
<comment type="tissue specificity">
    <molecule>Isoform 3</molecule>
    <text evidence="7">Expressed in brain.</text>
</comment>
<comment type="domain">
    <text evidence="13">The WD repeats mediate interaction with substrates of the SCF (SKP1-CUL1-F-box protein) E3 ubiquitin-protein ligase complex.</text>
</comment>
<comment type="domain">
    <text evidence="13 29">The F-box domain mediates interaction with SKP1.</text>
</comment>
<comment type="PTM">
    <text evidence="17 24">Phosphorylation at Thr-205 promotes interaction with PIN1, leading to disrupt FBXW7 dimerization and promoting FBXW7 autoubiquitination and degradation (PubMed:22608923). Phosphorylated by ATM at Ser-26 in response to DNA damage, promoting recruitment to DNA damage sites and 'Lys-63'-linked ubiquitination of phosphorylated XRCC4 (PubMed:26774286).</text>
</comment>
<comment type="PTM">
    <text evidence="17">Ubiquitinated: autoubiquitinates following phosphorylation at Thr-205 and subsequent interaction with PIN1. Ubiquitination leads to its proteasomal degradation (PubMed:22608923).</text>
</comment>
<comment type="disease" evidence="34">
    <disease id="DI-06489">
        <name>Developmental delay, hypotonia, and impaired language</name>
        <acronym>DEDHIL</acronym>
        <description>An autosomal dominant neurodevelopmental disorder characterized by global developmental delay, borderline to severe intellectual disability, language difficulties, hypotonia, and gastrointestinal problems. Brain imaging shows variable structural abnormalities affecting the cerebellum, corpus collosum, and white matter.</description>
        <dbReference type="MIM" id="620012"/>
    </disease>
    <text>The disease is caused by variants affecting the gene represented in this entry.</text>
</comment>
<comment type="sequence caution" evidence="41">
    <conflict type="erroneous initiation">
        <sequence resource="EMBL-CDS" id="BAA91986"/>
    </conflict>
    <text>Truncated N-terminus.</text>
</comment>
<sequence>MNQELLSVGSKRRRTGGSLRGNPSSSQVDEEQMNRVVEEEQQQQLRQQEEEHTARNGEVVGVEPRPGGQNDSQQGQLEENNNRFISVDEDSSGNQEEQEEDEEHAGEQDEEDEEEEEMDQESDDFDQSDDSSREDEHTHTNSVTNSSSIVDLPVHQLSSPFYTKTTKMKRKLDHGSEVRSFSLGKKPCKVSEYTSTTGLVPCSATPTTFGDLRAANGQGQQRRRITSVQPPTGLQEWLKMFQSWSGPEKLLALDELIDSCEPTQVKHMMQVIEPQFQRDFISLLPKELALYVLSFLEPKDLLQAAQTCRYWRILAEDNLLWREKCKEEGIDEPLHIKRRKVIKPGFIHSPWKSAYIRQHRIDTNWRRGELKSPKVLKGHDDHVITCLQFCGNRIVSGSDDNTLKVWSAVTGKCLRTLVGHTGGVWSSQMRDNIIISGSTDRTLKVWNAETGECIHTLYGHTSTVRCMHLHEKRVVSGSRDATLRVWDIETGQCLHVLMGHVAAVRCVQYDGRRVVSGAYDFMVKVWDPETETCLHTLQGHTNRVYSLQFDGIHVVSGSLDTSIRVWDVETGNCIHTLTGHQSLTSGMELKDNILVSGNADSTVKIWDIKTGQCLQTLQGPNKHQSAVTCLQFNKNFVITSSDDGTVKLWDLKTGEFIRNLVTLESGGSGGVVWRIRASNTKLVCAVGSRNGTEETKLLVLDFDVDMK</sequence>
<feature type="chain" id="PRO_0000050994" description="F-box/WD repeat-containing protein 7">
    <location>
        <begin position="1"/>
        <end position="707"/>
    </location>
</feature>
<feature type="domain" description="F-box" evidence="2">
    <location>
        <begin position="278"/>
        <end position="324"/>
    </location>
</feature>
<feature type="repeat" description="WD 1">
    <location>
        <begin position="378"/>
        <end position="418"/>
    </location>
</feature>
<feature type="repeat" description="WD 2">
    <location>
        <begin position="420"/>
        <end position="456"/>
    </location>
</feature>
<feature type="repeat" description="WD 3">
    <location>
        <begin position="459"/>
        <end position="498"/>
    </location>
</feature>
<feature type="repeat" description="WD 4">
    <location>
        <begin position="500"/>
        <end position="536"/>
    </location>
</feature>
<feature type="repeat" description="WD 5">
    <location>
        <begin position="539"/>
        <end position="578"/>
    </location>
</feature>
<feature type="repeat" description="WD 6">
    <location>
        <begin position="580"/>
        <end position="618"/>
    </location>
</feature>
<feature type="repeat" description="WD 7">
    <location>
        <begin position="622"/>
        <end position="659"/>
    </location>
</feature>
<feature type="region of interest" description="Disordered" evidence="3">
    <location>
        <begin position="1"/>
        <end position="151"/>
    </location>
</feature>
<feature type="compositionally biased region" description="Low complexity" evidence="3">
    <location>
        <begin position="57"/>
        <end position="68"/>
    </location>
</feature>
<feature type="compositionally biased region" description="Polar residues" evidence="3">
    <location>
        <begin position="69"/>
        <end position="84"/>
    </location>
</feature>
<feature type="compositionally biased region" description="Acidic residues" evidence="3">
    <location>
        <begin position="87"/>
        <end position="129"/>
    </location>
</feature>
<feature type="compositionally biased region" description="Basic and acidic residues" evidence="3">
    <location>
        <begin position="130"/>
        <end position="139"/>
    </location>
</feature>
<feature type="modified residue" description="Phosphoserine; by ATM" evidence="24">
    <location>
        <position position="26"/>
    </location>
</feature>
<feature type="modified residue" description="Phosphothreonine" evidence="17">
    <location>
        <position position="205"/>
    </location>
</feature>
<feature type="modified residue" description="Phosphoserine; by SGK1" evidence="16">
    <location>
        <position position="227"/>
    </location>
</feature>
<feature type="splice variant" id="VSP_009482" description="In isoform 3." evidence="38">
    <location>
        <begin position="1"/>
        <end position="118"/>
    </location>
</feature>
<feature type="splice variant" id="VSP_009483" description="In isoform 2." evidence="35 36">
    <location>
        <begin position="1"/>
        <end position="80"/>
    </location>
</feature>
<feature type="splice variant" id="VSP_009484" description="In isoform 2." evidence="35 36">
    <original>NNRFISVDEDSSGNQEEQEEDEEHAGEQDEEDEEEEEMDQESDDFDQSDDSSREDEHTHTNSVTNSSSIVDLPVHQLSSPFYTKTT</original>
    <variation>MCVPRSGLILSCICLYCGVLLPVLLPNLPFLTCLSMSTLESVTYLPEKGLYCQRLPSSRTHGGTESLKGKNTENMGFYGTLKMIFY</variation>
    <location>
        <begin position="81"/>
        <end position="166"/>
    </location>
</feature>
<feature type="splice variant" id="VSP_009485" description="In isoform 3." evidence="38">
    <original>DQESDDFDQSDDSSREDEHTHTNSVTNSSSIVDLPVHQLSSPFYTKTTK</original>
    <variation>MSKPGKPTLNHGLVPVDLKSAKEPLPHQTVMKIFSISIIAQGLPFCRRR</variation>
    <location>
        <begin position="119"/>
        <end position="167"/>
    </location>
</feature>
<feature type="sequence variant" id="VAR_017812" description="In dbSNP:rs6816935.">
    <original>E</original>
    <variation>K</variation>
    <location>
        <position position="115"/>
    </location>
</feature>
<feature type="sequence variant" id="VAR_033030" description="In a breast cancer sample; somatic mutation; dbSNP:rs991177157." evidence="12">
    <original>E</original>
    <variation>K</variation>
    <location>
        <position position="117"/>
    </location>
</feature>
<feature type="sequence variant" id="VAR_017813" description="In dbSNP:rs6842544.">
    <original>R</original>
    <variation>G</variation>
    <location>
        <position position="133"/>
    </location>
</feature>
<feature type="sequence variant" id="VAR_017814" description="In dbSNP:rs7660281.">
    <original>T</original>
    <variation>R</variation>
    <location>
        <position position="144"/>
    </location>
</feature>
<feature type="sequence variant" id="VAR_087662" description="In DEDHIL." evidence="34">
    <original>T</original>
    <variation>A</variation>
    <location>
        <position position="416"/>
    </location>
</feature>
<feature type="sequence variant" id="VAR_087663" description="In DEDHIL." evidence="34">
    <original>T</original>
    <variation>I</variation>
    <location>
        <position position="416"/>
    </location>
</feature>
<feature type="sequence variant" id="VAR_087664" description="In DEDHIL." evidence="34">
    <original>H</original>
    <variation>L</variation>
    <location>
        <position position="420"/>
    </location>
</feature>
<feature type="sequence variant" id="VAR_087665" description="In DEDHIL; no effect on protein abundance; changed proteasome-mediated ubiquitin-dependent protein catabolic process." evidence="34">
    <original>G</original>
    <variation>R</variation>
    <location>
        <position position="423"/>
    </location>
</feature>
<feature type="sequence variant" id="VAR_087666" description="In DEDHIL." evidence="34">
    <original>R</original>
    <variation>G</variation>
    <location>
        <position position="441"/>
    </location>
</feature>
<feature type="sequence variant" id="VAR_087667" description="In DEDHIL." evidence="34">
    <original>S</original>
    <variation>P</variation>
    <location>
        <position position="462"/>
    </location>
</feature>
<feature type="sequence variant" id="VAR_017815" description="In an acute lymphoblastic leukemia cell line; loss of interaction with substrate; does not affect interaction with SKP1 or STYX; dbSNP:rs867384286." evidence="4 29">
    <original>R</original>
    <variation>C</variation>
    <location>
        <position position="465"/>
    </location>
</feature>
<feature type="sequence variant" id="VAR_035880" description="In DEDHIL; also found in a colorectal cancer sample; dbSNP:rs1057519895." evidence="11 34">
    <original>R</original>
    <variation>H</variation>
    <location>
        <position position="465"/>
    </location>
</feature>
<feature type="sequence variant" id="VAR_087668" description="In DEDHIL." evidence="34">
    <original>R</original>
    <variation>Q</variation>
    <location>
        <position position="479"/>
    </location>
</feature>
<feature type="sequence variant" id="VAR_087669" description="In DEDHIL; no effect on protein abundance; changed proteasome-mediated ubiquitin-dependent protein catabolic process." evidence="34">
    <original>D</original>
    <variation>G</variation>
    <location>
        <position position="480"/>
    </location>
</feature>
<feature type="sequence variant" id="VAR_087670" description="In DEDHIL." evidence="34">
    <original>R</original>
    <variation>H</variation>
    <location>
        <position position="505"/>
    </location>
</feature>
<feature type="sequence variant" id="VAR_017816" description="In an ovarian cancer cell line; dbSNP:rs1057519896." evidence="4 11">
    <original>R</original>
    <variation>L</variation>
    <location>
        <position position="505"/>
    </location>
</feature>
<feature type="sequence variant" id="VAR_087671" description="In DEDHIL; no effect on protein abundance; changed on proteasome-mediated ubiquitin-dependent protein catabolic process." evidence="34">
    <original>V</original>
    <variation>G</variation>
    <location>
        <position position="544"/>
    </location>
</feature>
<feature type="sequence variant" id="VAR_087672" description="In DEDHIL." evidence="34">
    <original>H</original>
    <variation>Y</variation>
    <location>
        <position position="580"/>
    </location>
</feature>
<feature type="sequence variant" id="VAR_087673" description="In DEDHIL." evidence="34">
    <original>S</original>
    <variation>A</variation>
    <location>
        <position position="582"/>
    </location>
</feature>
<feature type="sequence variant" id="VAR_035881" description="In a colorectal cancer sample; somatic mutation." evidence="11">
    <original>S</original>
    <variation>L</variation>
    <location>
        <position position="582"/>
    </location>
</feature>
<feature type="sequence variant" id="VAR_087674" description="In DEDHIL." evidence="34">
    <original>A</original>
    <variation>V</variation>
    <location>
        <position position="599"/>
    </location>
</feature>
<feature type="sequence variant" id="VAR_087675" description="In DEDHIL; uncertain significance." evidence="34">
    <original>I</original>
    <variation>V</variation>
    <location>
        <position position="608"/>
    </location>
</feature>
<feature type="sequence variant" id="VAR_087676" description="In DEDHIL." evidence="34">
    <original>A</original>
    <variation>V</variation>
    <location>
        <position position="626"/>
    </location>
</feature>
<feature type="sequence variant" id="VAR_087677" description="In DEDHIL; no effect on protein abundance; changed proteasome-mediated ubiquitin-dependent protein catabolic process." evidence="34">
    <original>S</original>
    <variation>R</variation>
    <location>
        <position position="640"/>
    </location>
</feature>
<feature type="sequence variant" id="VAR_087678" description="In DEDHIL; uncertain significance." evidence="34">
    <location>
        <begin position="647"/>
        <end position="707"/>
    </location>
</feature>
<feature type="sequence variant" id="VAR_017817" description="In dbSNP:rs7679116.">
    <original>S</original>
    <variation>G</variation>
    <location>
        <position position="668"/>
    </location>
</feature>
<feature type="sequence variant" id="VAR_087679" description="In DEDHIL; no effect on protein abundance; changed on proteasome-mediated ubiquitin-dependent protein catabolic process." evidence="34">
    <original>R</original>
    <variation>P</variation>
    <location>
        <position position="674"/>
    </location>
</feature>
<feature type="sequence variant" id="VAR_087680" description="In DEDHIL; no effect on protein abundance; changed proteasome-mediated ubiquitin-dependent protein catabolic process." evidence="34">
    <original>R</original>
    <variation>W</variation>
    <location>
        <position position="674"/>
    </location>
</feature>
<feature type="sequence variant" id="VAR_087681" description="In DEDHIL; decreased protein abundance; no effect on proteasome-mediated ubiquitin-dependent protein catabolic process." evidence="34">
    <original>R</original>
    <variation>Q</variation>
    <location>
        <position position="689"/>
    </location>
</feature>
<feature type="sequence variant" id="VAR_087682" description="In DEDHIL." evidence="34">
    <original>R</original>
    <variation>W</variation>
    <location>
        <position position="689"/>
    </location>
</feature>
<feature type="mutagenesis site" description="Abolished phosphorylation by ATM." evidence="24">
    <original>S</original>
    <variation>A</variation>
    <location>
        <position position="26"/>
    </location>
</feature>
<feature type="mutagenesis site" description="Does not affect phosphorylation by ATM." evidence="24">
    <original>S</original>
    <variation>A</variation>
    <location>
        <position position="72"/>
    </location>
</feature>
<feature type="mutagenesis site" description="Does not affect interaction with PIN1." evidence="17">
    <original>S</original>
    <variation>A</variation>
    <location>
        <position position="159"/>
    </location>
</feature>
<feature type="mutagenesis site" description="Impaired interaction with PIN1." evidence="17">
    <original>T</original>
    <variation>A</variation>
    <location>
        <position position="205"/>
    </location>
</feature>
<feature type="mutagenesis site" description="Prevents homodimerization." evidence="13">
    <original>ALDELI</original>
    <variation>DDDEDD</variation>
    <location>
        <begin position="252"/>
        <end position="257"/>
    </location>
</feature>
<feature type="mutagenesis site" description="Does not affect interaction with PIN1." evidence="17">
    <original>S</original>
    <variation>A</variation>
    <location>
        <position position="349"/>
    </location>
</feature>
<feature type="mutagenesis site" description="Does not affect interaction with PIN1." evidence="17">
    <original>S</original>
    <variation>A</variation>
    <location>
        <position position="372"/>
    </location>
</feature>
<feature type="sequence conflict" description="In Ref. 6; AAH37320." evidence="41" ref="6">
    <original>P</original>
    <variation>L</variation>
    <location>
        <position position="344"/>
    </location>
</feature>
<feature type="sequence conflict" description="In Ref. 6; AAH37320." evidence="41" ref="6">
    <original>K</original>
    <variation>N</variation>
    <location>
        <position position="377"/>
    </location>
</feature>
<feature type="sequence conflict" description="In Ref. 6; AAH37320." evidence="41" ref="6">
    <original>Q</original>
    <variation>R</variation>
    <location>
        <position position="508"/>
    </location>
</feature>
<feature type="helix" evidence="50">
    <location>
        <begin position="265"/>
        <end position="272"/>
    </location>
</feature>
<feature type="turn" evidence="50">
    <location>
        <begin position="280"/>
        <end position="282"/>
    </location>
</feature>
<feature type="helix" evidence="50">
    <location>
        <begin position="286"/>
        <end position="293"/>
    </location>
</feature>
<feature type="helix" evidence="50">
    <location>
        <begin position="298"/>
        <end position="304"/>
    </location>
</feature>
<feature type="helix" evidence="50">
    <location>
        <begin position="309"/>
        <end position="315"/>
    </location>
</feature>
<feature type="helix" evidence="50">
    <location>
        <begin position="319"/>
        <end position="325"/>
    </location>
</feature>
<feature type="turn" evidence="50">
    <location>
        <begin position="326"/>
        <end position="329"/>
    </location>
</feature>
<feature type="helix" evidence="50">
    <location>
        <begin position="350"/>
        <end position="367"/>
    </location>
</feature>
<feature type="strand" evidence="50">
    <location>
        <begin position="374"/>
        <end position="377"/>
    </location>
</feature>
<feature type="strand" evidence="50">
    <location>
        <begin position="384"/>
        <end position="390"/>
    </location>
</feature>
<feature type="strand" evidence="50">
    <location>
        <begin position="393"/>
        <end position="398"/>
    </location>
</feature>
<feature type="strand" evidence="50">
    <location>
        <begin position="403"/>
        <end position="407"/>
    </location>
</feature>
<feature type="turn" evidence="50">
    <location>
        <begin position="408"/>
        <end position="410"/>
    </location>
</feature>
<feature type="strand" evidence="50">
    <location>
        <begin position="413"/>
        <end position="416"/>
    </location>
</feature>
<feature type="strand" evidence="50">
    <location>
        <begin position="424"/>
        <end position="430"/>
    </location>
</feature>
<feature type="strand" evidence="50">
    <location>
        <begin position="433"/>
        <end position="438"/>
    </location>
</feature>
<feature type="strand" evidence="50">
    <location>
        <begin position="443"/>
        <end position="447"/>
    </location>
</feature>
<feature type="turn" evidence="50">
    <location>
        <begin position="448"/>
        <end position="451"/>
    </location>
</feature>
<feature type="strand" evidence="50">
    <location>
        <begin position="452"/>
        <end position="457"/>
    </location>
</feature>
<feature type="strand" evidence="50">
    <location>
        <begin position="464"/>
        <end position="470"/>
    </location>
</feature>
<feature type="strand" evidence="50">
    <location>
        <begin position="473"/>
        <end position="478"/>
    </location>
</feature>
<feature type="strand" evidence="50">
    <location>
        <begin position="481"/>
        <end position="490"/>
    </location>
</feature>
<feature type="strand" evidence="50">
    <location>
        <begin position="493"/>
        <end position="498"/>
    </location>
</feature>
<feature type="strand" evidence="50">
    <location>
        <begin position="504"/>
        <end position="509"/>
    </location>
</feature>
<feature type="strand" evidence="50">
    <location>
        <begin position="514"/>
        <end position="518"/>
    </location>
</feature>
<feature type="strand" evidence="50">
    <location>
        <begin position="523"/>
        <end position="527"/>
    </location>
</feature>
<feature type="helix" evidence="50">
    <location>
        <begin position="528"/>
        <end position="530"/>
    </location>
</feature>
<feature type="strand" evidence="50">
    <location>
        <begin position="532"/>
        <end position="537"/>
    </location>
</feature>
<feature type="strand" evidence="50">
    <location>
        <begin position="544"/>
        <end position="549"/>
    </location>
</feature>
<feature type="strand" evidence="50">
    <location>
        <begin position="551"/>
        <end position="558"/>
    </location>
</feature>
<feature type="strand" evidence="50">
    <location>
        <begin position="563"/>
        <end position="567"/>
    </location>
</feature>
<feature type="turn" evidence="50">
    <location>
        <begin position="568"/>
        <end position="570"/>
    </location>
</feature>
<feature type="strand" evidence="50">
    <location>
        <begin position="573"/>
        <end position="577"/>
    </location>
</feature>
<feature type="strand" evidence="50">
    <location>
        <begin position="584"/>
        <end position="590"/>
    </location>
</feature>
<feature type="strand" evidence="50">
    <location>
        <begin position="593"/>
        <end position="598"/>
    </location>
</feature>
<feature type="strand" evidence="50">
    <location>
        <begin position="603"/>
        <end position="607"/>
    </location>
</feature>
<feature type="turn" evidence="50">
    <location>
        <begin position="608"/>
        <end position="610"/>
    </location>
</feature>
<feature type="strand" evidence="50">
    <location>
        <begin position="613"/>
        <end position="617"/>
    </location>
</feature>
<feature type="strand" evidence="50">
    <location>
        <begin position="627"/>
        <end position="632"/>
    </location>
</feature>
<feature type="strand" evidence="50">
    <location>
        <begin position="634"/>
        <end position="641"/>
    </location>
</feature>
<feature type="strand" evidence="50">
    <location>
        <begin position="644"/>
        <end position="650"/>
    </location>
</feature>
<feature type="turn" evidence="50">
    <location>
        <begin position="651"/>
        <end position="653"/>
    </location>
</feature>
<feature type="strand" evidence="50">
    <location>
        <begin position="656"/>
        <end position="662"/>
    </location>
</feature>
<feature type="helix" evidence="50">
    <location>
        <begin position="666"/>
        <end position="668"/>
    </location>
</feature>
<feature type="strand" evidence="50">
    <location>
        <begin position="671"/>
        <end position="677"/>
    </location>
</feature>
<feature type="strand" evidence="50">
    <location>
        <begin position="679"/>
        <end position="687"/>
    </location>
</feature>
<feature type="strand" evidence="50">
    <location>
        <begin position="689"/>
        <end position="693"/>
    </location>
</feature>
<feature type="strand" evidence="50">
    <location>
        <begin position="696"/>
        <end position="701"/>
    </location>
</feature>
<feature type="sequence conflict" description="In Ref. 6; AAH37320." evidence="41" ref="6">
    <original>G</original>
    <variation>V</variation>
    <location sequence="Q969H0-2">
        <position position="7"/>
    </location>
</feature>
<feature type="sequence conflict" description="In Ref. 7; BAA91986." evidence="41" ref="7">
    <original>L</original>
    <variation>I</variation>
    <location sequence="Q969H0-2">
        <position position="50"/>
    </location>
</feature>
<name>FBXW7_HUMAN</name>
<proteinExistence type="evidence at protein level"/>